<accession>Q13976</accession>
<accession>A5YM56</accession>
<accession>B3KSF3</accession>
<accession>E2PU10</accession>
<accession>P14619</accession>
<accession>Q5JP05</accession>
<accession>Q5JSJ6</accession>
<accession>Q6P5T7</accession>
<evidence type="ECO:0000250" key="1"/>
<evidence type="ECO:0000250" key="2">
    <source>
        <dbReference type="UniProtKB" id="P00516"/>
    </source>
</evidence>
<evidence type="ECO:0000250" key="3">
    <source>
        <dbReference type="UniProtKB" id="P0C605"/>
    </source>
</evidence>
<evidence type="ECO:0000255" key="4">
    <source>
        <dbReference type="PROSITE-ProRule" id="PRU00159"/>
    </source>
</evidence>
<evidence type="ECO:0000255" key="5">
    <source>
        <dbReference type="PROSITE-ProRule" id="PRU00618"/>
    </source>
</evidence>
<evidence type="ECO:0000255" key="6">
    <source>
        <dbReference type="PROSITE-ProRule" id="PRU10027"/>
    </source>
</evidence>
<evidence type="ECO:0000256" key="7">
    <source>
        <dbReference type="SAM" id="MobiDB-lite"/>
    </source>
</evidence>
<evidence type="ECO:0000269" key="8">
    <source>
    </source>
</evidence>
<evidence type="ECO:0000269" key="9">
    <source>
    </source>
</evidence>
<evidence type="ECO:0000269" key="10">
    <source>
    </source>
</evidence>
<evidence type="ECO:0000269" key="11">
    <source>
    </source>
</evidence>
<evidence type="ECO:0000269" key="12">
    <source>
    </source>
</evidence>
<evidence type="ECO:0000269" key="13">
    <source>
    </source>
</evidence>
<evidence type="ECO:0000269" key="14">
    <source>
    </source>
</evidence>
<evidence type="ECO:0000269" key="15">
    <source>
    </source>
</evidence>
<evidence type="ECO:0000269" key="16">
    <source>
    </source>
</evidence>
<evidence type="ECO:0000269" key="17">
    <source>
    </source>
</evidence>
<evidence type="ECO:0000269" key="18">
    <source>
    </source>
</evidence>
<evidence type="ECO:0000269" key="19">
    <source>
    </source>
</evidence>
<evidence type="ECO:0000269" key="20">
    <source>
    </source>
</evidence>
<evidence type="ECO:0000269" key="21">
    <source>
    </source>
</evidence>
<evidence type="ECO:0000269" key="22">
    <source>
    </source>
</evidence>
<evidence type="ECO:0000269" key="23">
    <source>
    </source>
</evidence>
<evidence type="ECO:0000269" key="24">
    <source>
    </source>
</evidence>
<evidence type="ECO:0000269" key="25">
    <source>
    </source>
</evidence>
<evidence type="ECO:0000269" key="26">
    <source>
    </source>
</evidence>
<evidence type="ECO:0000303" key="27">
    <source>
    </source>
</evidence>
<evidence type="ECO:0000303" key="28">
    <source>
    </source>
</evidence>
<evidence type="ECO:0000303" key="29">
    <source>
    </source>
</evidence>
<evidence type="ECO:0000303" key="30">
    <source>
    </source>
</evidence>
<evidence type="ECO:0000305" key="31"/>
<evidence type="ECO:0007744" key="32">
    <source>
        <dbReference type="PDB" id="3NMD"/>
    </source>
</evidence>
<evidence type="ECO:0007744" key="33">
    <source>
        <dbReference type="PDB" id="3OCP"/>
    </source>
</evidence>
<evidence type="ECO:0007744" key="34">
    <source>
        <dbReference type="PDB" id="3OD0"/>
    </source>
</evidence>
<evidence type="ECO:0007744" key="35">
    <source>
        <dbReference type="PDB" id="3OGJ"/>
    </source>
</evidence>
<evidence type="ECO:0007744" key="36">
    <source>
        <dbReference type="PDB" id="4KU7"/>
    </source>
</evidence>
<evidence type="ECO:0007744" key="37">
    <source>
        <dbReference type="PDB" id="4KU8"/>
    </source>
</evidence>
<evidence type="ECO:0007744" key="38">
    <source>
        <dbReference type="PDB" id="4QX5"/>
    </source>
</evidence>
<evidence type="ECO:0007744" key="39">
    <source>
        <dbReference type="PDB" id="4QXK"/>
    </source>
</evidence>
<evidence type="ECO:0007744" key="40">
    <source>
    </source>
</evidence>
<evidence type="ECO:0007829" key="41">
    <source>
        <dbReference type="PDB" id="3OD0"/>
    </source>
</evidence>
<evidence type="ECO:0007829" key="42">
    <source>
        <dbReference type="PDB" id="4KU8"/>
    </source>
</evidence>
<evidence type="ECO:0007829" key="43">
    <source>
        <dbReference type="PDB" id="4R4M"/>
    </source>
</evidence>
<evidence type="ECO:0007829" key="44">
    <source>
        <dbReference type="PDB" id="5L0N"/>
    </source>
</evidence>
<evidence type="ECO:0007829" key="45">
    <source>
        <dbReference type="PDB" id="6BG2"/>
    </source>
</evidence>
<evidence type="ECO:0007829" key="46">
    <source>
        <dbReference type="PDB" id="7LV3"/>
    </source>
</evidence>
<evidence type="ECO:0007829" key="47">
    <source>
        <dbReference type="PDB" id="7MBJ"/>
    </source>
</evidence>
<evidence type="ECO:0007829" key="48">
    <source>
        <dbReference type="PDB" id="7SSB"/>
    </source>
</evidence>
<evidence type="ECO:0007829" key="49">
    <source>
        <dbReference type="PDB" id="7T4T"/>
    </source>
</evidence>
<dbReference type="EC" id="2.7.11.12"/>
<dbReference type="EMBL" id="Y07512">
    <property type="protein sequence ID" value="CAA68810.1"/>
    <property type="molecule type" value="mRNA"/>
</dbReference>
<dbReference type="EMBL" id="D45864">
    <property type="protein sequence ID" value="BAA08297.1"/>
    <property type="molecule type" value="mRNA"/>
</dbReference>
<dbReference type="EMBL" id="AK093436">
    <property type="protein sequence ID" value="BAG52715.1"/>
    <property type="molecule type" value="mRNA"/>
</dbReference>
<dbReference type="EMBL" id="EF560730">
    <property type="protein sequence ID" value="ABQ59040.1"/>
    <property type="molecule type" value="mRNA"/>
</dbReference>
<dbReference type="EMBL" id="Z92867">
    <property type="protein sequence ID" value="CAB07436.1"/>
    <property type="molecule type" value="Genomic_DNA"/>
</dbReference>
<dbReference type="EMBL" id="Z92869">
    <property type="protein sequence ID" value="CAB07436.1"/>
    <property type="status" value="JOINED"/>
    <property type="molecule type" value="Genomic_DNA"/>
</dbReference>
<dbReference type="EMBL" id="Z92870">
    <property type="protein sequence ID" value="CAB07436.1"/>
    <property type="status" value="JOINED"/>
    <property type="molecule type" value="Genomic_DNA"/>
</dbReference>
<dbReference type="EMBL" id="Z92871">
    <property type="protein sequence ID" value="CAB07436.1"/>
    <property type="status" value="JOINED"/>
    <property type="molecule type" value="Genomic_DNA"/>
</dbReference>
<dbReference type="EMBL" id="Z92872">
    <property type="protein sequence ID" value="CAB07436.1"/>
    <property type="status" value="JOINED"/>
    <property type="molecule type" value="Genomic_DNA"/>
</dbReference>
<dbReference type="EMBL" id="Z92873">
    <property type="protein sequence ID" value="CAB07436.1"/>
    <property type="status" value="JOINED"/>
    <property type="molecule type" value="Genomic_DNA"/>
</dbReference>
<dbReference type="EMBL" id="Z92874">
    <property type="protein sequence ID" value="CAB07436.1"/>
    <property type="status" value="JOINED"/>
    <property type="molecule type" value="Genomic_DNA"/>
</dbReference>
<dbReference type="EMBL" id="Z92875">
    <property type="protein sequence ID" value="CAB07436.1"/>
    <property type="status" value="JOINED"/>
    <property type="molecule type" value="Genomic_DNA"/>
</dbReference>
<dbReference type="EMBL" id="Z92876">
    <property type="protein sequence ID" value="CAB07436.1"/>
    <property type="status" value="JOINED"/>
    <property type="molecule type" value="Genomic_DNA"/>
</dbReference>
<dbReference type="EMBL" id="Z92877">
    <property type="protein sequence ID" value="CAB07436.1"/>
    <property type="status" value="JOINED"/>
    <property type="molecule type" value="Genomic_DNA"/>
</dbReference>
<dbReference type="EMBL" id="Z92878">
    <property type="protein sequence ID" value="CAB07436.1"/>
    <property type="status" value="JOINED"/>
    <property type="molecule type" value="Genomic_DNA"/>
</dbReference>
<dbReference type="EMBL" id="Z92879">
    <property type="protein sequence ID" value="CAB07436.1"/>
    <property type="status" value="JOINED"/>
    <property type="molecule type" value="Genomic_DNA"/>
</dbReference>
<dbReference type="EMBL" id="Z92880">
    <property type="protein sequence ID" value="CAB07436.1"/>
    <property type="status" value="JOINED"/>
    <property type="molecule type" value="Genomic_DNA"/>
</dbReference>
<dbReference type="EMBL" id="Z92881">
    <property type="protein sequence ID" value="CAB07436.1"/>
    <property type="status" value="JOINED"/>
    <property type="molecule type" value="Genomic_DNA"/>
</dbReference>
<dbReference type="EMBL" id="Z92882">
    <property type="protein sequence ID" value="CAB07436.1"/>
    <property type="status" value="JOINED"/>
    <property type="molecule type" value="Genomic_DNA"/>
</dbReference>
<dbReference type="EMBL" id="Z92883">
    <property type="protein sequence ID" value="CAB07436.1"/>
    <property type="status" value="JOINED"/>
    <property type="molecule type" value="Genomic_DNA"/>
</dbReference>
<dbReference type="EMBL" id="Z92884">
    <property type="protein sequence ID" value="CAB07436.1"/>
    <property type="status" value="JOINED"/>
    <property type="molecule type" value="Genomic_DNA"/>
</dbReference>
<dbReference type="EMBL" id="Z92885">
    <property type="protein sequence ID" value="CAB07436.1"/>
    <property type="status" value="JOINED"/>
    <property type="molecule type" value="Genomic_DNA"/>
</dbReference>
<dbReference type="EMBL" id="Z92868">
    <property type="protein sequence ID" value="CAB07437.1"/>
    <property type="molecule type" value="Genomic_DNA"/>
</dbReference>
<dbReference type="EMBL" id="Z92869">
    <property type="protein sequence ID" value="CAB07437.1"/>
    <property type="status" value="JOINED"/>
    <property type="molecule type" value="Genomic_DNA"/>
</dbReference>
<dbReference type="EMBL" id="Z92870">
    <property type="protein sequence ID" value="CAB07437.1"/>
    <property type="status" value="JOINED"/>
    <property type="molecule type" value="Genomic_DNA"/>
</dbReference>
<dbReference type="EMBL" id="Z92871">
    <property type="protein sequence ID" value="CAB07437.1"/>
    <property type="status" value="JOINED"/>
    <property type="molecule type" value="Genomic_DNA"/>
</dbReference>
<dbReference type="EMBL" id="Z92872">
    <property type="protein sequence ID" value="CAB07437.1"/>
    <property type="status" value="JOINED"/>
    <property type="molecule type" value="Genomic_DNA"/>
</dbReference>
<dbReference type="EMBL" id="Z92873">
    <property type="protein sequence ID" value="CAB07437.1"/>
    <property type="status" value="JOINED"/>
    <property type="molecule type" value="Genomic_DNA"/>
</dbReference>
<dbReference type="EMBL" id="Z92874">
    <property type="protein sequence ID" value="CAB07437.1"/>
    <property type="status" value="JOINED"/>
    <property type="molecule type" value="Genomic_DNA"/>
</dbReference>
<dbReference type="EMBL" id="Z92875">
    <property type="protein sequence ID" value="CAB07437.1"/>
    <property type="status" value="JOINED"/>
    <property type="molecule type" value="Genomic_DNA"/>
</dbReference>
<dbReference type="EMBL" id="Z92876">
    <property type="protein sequence ID" value="CAB07437.1"/>
    <property type="status" value="JOINED"/>
    <property type="molecule type" value="Genomic_DNA"/>
</dbReference>
<dbReference type="EMBL" id="Z92877">
    <property type="protein sequence ID" value="CAB07437.1"/>
    <property type="status" value="JOINED"/>
    <property type="molecule type" value="Genomic_DNA"/>
</dbReference>
<dbReference type="EMBL" id="Z92878">
    <property type="protein sequence ID" value="CAB07437.1"/>
    <property type="status" value="JOINED"/>
    <property type="molecule type" value="Genomic_DNA"/>
</dbReference>
<dbReference type="EMBL" id="Z92879">
    <property type="protein sequence ID" value="CAB07437.1"/>
    <property type="status" value="JOINED"/>
    <property type="molecule type" value="Genomic_DNA"/>
</dbReference>
<dbReference type="EMBL" id="Z92880">
    <property type="protein sequence ID" value="CAB07437.1"/>
    <property type="status" value="JOINED"/>
    <property type="molecule type" value="Genomic_DNA"/>
</dbReference>
<dbReference type="EMBL" id="Z92881">
    <property type="protein sequence ID" value="CAB07437.1"/>
    <property type="status" value="JOINED"/>
    <property type="molecule type" value="Genomic_DNA"/>
</dbReference>
<dbReference type="EMBL" id="Z92882">
    <property type="protein sequence ID" value="CAB07437.1"/>
    <property type="status" value="JOINED"/>
    <property type="molecule type" value="Genomic_DNA"/>
</dbReference>
<dbReference type="EMBL" id="Z92883">
    <property type="protein sequence ID" value="CAB07437.1"/>
    <property type="status" value="JOINED"/>
    <property type="molecule type" value="Genomic_DNA"/>
</dbReference>
<dbReference type="EMBL" id="Z92884">
    <property type="protein sequence ID" value="CAB07437.1"/>
    <property type="status" value="JOINED"/>
    <property type="molecule type" value="Genomic_DNA"/>
</dbReference>
<dbReference type="EMBL" id="Z92885">
    <property type="protein sequence ID" value="CAB07437.1"/>
    <property type="status" value="JOINED"/>
    <property type="molecule type" value="Genomic_DNA"/>
</dbReference>
<dbReference type="EMBL" id="AL391378">
    <property type="protein sequence ID" value="CAI39626.1"/>
    <property type="molecule type" value="Genomic_DNA"/>
</dbReference>
<dbReference type="EMBL" id="AC009986">
    <property type="protein sequence ID" value="CAI39626.1"/>
    <property type="status" value="JOINED"/>
    <property type="molecule type" value="Genomic_DNA"/>
</dbReference>
<dbReference type="EMBL" id="AC022537">
    <property type="protein sequence ID" value="CAI39626.1"/>
    <property type="status" value="JOINED"/>
    <property type="molecule type" value="Genomic_DNA"/>
</dbReference>
<dbReference type="EMBL" id="AC022025">
    <property type="protein sequence ID" value="CAI39626.1"/>
    <property type="status" value="JOINED"/>
    <property type="molecule type" value="Genomic_DNA"/>
</dbReference>
<dbReference type="EMBL" id="AC027118">
    <property type="protein sequence ID" value="CAI39626.1"/>
    <property type="status" value="JOINED"/>
    <property type="molecule type" value="Genomic_DNA"/>
</dbReference>
<dbReference type="EMBL" id="AL731537">
    <property type="protein sequence ID" value="CAI39626.1"/>
    <property type="status" value="JOINED"/>
    <property type="molecule type" value="Genomic_DNA"/>
</dbReference>
<dbReference type="EMBL" id="AL928686">
    <property type="protein sequence ID" value="CAI39626.1"/>
    <property type="status" value="JOINED"/>
    <property type="molecule type" value="Genomic_DNA"/>
</dbReference>
<dbReference type="EMBL" id="AL157399">
    <property type="protein sequence ID" value="CAI39626.1"/>
    <property type="status" value="JOINED"/>
    <property type="molecule type" value="Genomic_DNA"/>
</dbReference>
<dbReference type="EMBL" id="AC026228">
    <property type="protein sequence ID" value="CAI39626.1"/>
    <property type="status" value="JOINED"/>
    <property type="molecule type" value="Genomic_DNA"/>
</dbReference>
<dbReference type="EMBL" id="AL928686">
    <property type="protein sequence ID" value="CAI40743.1"/>
    <property type="molecule type" value="Genomic_DNA"/>
</dbReference>
<dbReference type="EMBL" id="AC009986">
    <property type="protein sequence ID" value="CAI40743.1"/>
    <property type="status" value="JOINED"/>
    <property type="molecule type" value="Genomic_DNA"/>
</dbReference>
<dbReference type="EMBL" id="AC022537">
    <property type="protein sequence ID" value="CAI40743.1"/>
    <property type="status" value="JOINED"/>
    <property type="molecule type" value="Genomic_DNA"/>
</dbReference>
<dbReference type="EMBL" id="AL731537">
    <property type="protein sequence ID" value="CAI40743.1"/>
    <property type="status" value="JOINED"/>
    <property type="molecule type" value="Genomic_DNA"/>
</dbReference>
<dbReference type="EMBL" id="AL391378">
    <property type="protein sequence ID" value="CAI40743.1"/>
    <property type="status" value="JOINED"/>
    <property type="molecule type" value="Genomic_DNA"/>
</dbReference>
<dbReference type="EMBL" id="AL157399">
    <property type="protein sequence ID" value="CAI40743.1"/>
    <property type="status" value="JOINED"/>
    <property type="molecule type" value="Genomic_DNA"/>
</dbReference>
<dbReference type="EMBL" id="AC027118">
    <property type="protein sequence ID" value="CAI40743.1"/>
    <property type="status" value="JOINED"/>
    <property type="molecule type" value="Genomic_DNA"/>
</dbReference>
<dbReference type="EMBL" id="AC026228">
    <property type="protein sequence ID" value="CAI40743.1"/>
    <property type="status" value="JOINED"/>
    <property type="molecule type" value="Genomic_DNA"/>
</dbReference>
<dbReference type="EMBL" id="AC022025">
    <property type="protein sequence ID" value="CAI40743.1"/>
    <property type="status" value="JOINED"/>
    <property type="molecule type" value="Genomic_DNA"/>
</dbReference>
<dbReference type="EMBL" id="AL157399">
    <property type="protein sequence ID" value="CAI41305.1"/>
    <property type="molecule type" value="Genomic_DNA"/>
</dbReference>
<dbReference type="EMBL" id="AC022025">
    <property type="protein sequence ID" value="CAI41305.1"/>
    <property type="status" value="JOINED"/>
    <property type="molecule type" value="Genomic_DNA"/>
</dbReference>
<dbReference type="EMBL" id="AC009986">
    <property type="protein sequence ID" value="CAI41305.1"/>
    <property type="status" value="JOINED"/>
    <property type="molecule type" value="Genomic_DNA"/>
</dbReference>
<dbReference type="EMBL" id="AL928686">
    <property type="protein sequence ID" value="CAI41305.1"/>
    <property type="status" value="JOINED"/>
    <property type="molecule type" value="Genomic_DNA"/>
</dbReference>
<dbReference type="EMBL" id="AL731537">
    <property type="protein sequence ID" value="CAI41305.1"/>
    <property type="status" value="JOINED"/>
    <property type="molecule type" value="Genomic_DNA"/>
</dbReference>
<dbReference type="EMBL" id="AL391378">
    <property type="protein sequence ID" value="CAI41305.1"/>
    <property type="status" value="JOINED"/>
    <property type="molecule type" value="Genomic_DNA"/>
</dbReference>
<dbReference type="EMBL" id="AC027118">
    <property type="protein sequence ID" value="CAI41305.1"/>
    <property type="status" value="JOINED"/>
    <property type="molecule type" value="Genomic_DNA"/>
</dbReference>
<dbReference type="EMBL" id="AC026228">
    <property type="protein sequence ID" value="CAI41305.1"/>
    <property type="status" value="JOINED"/>
    <property type="molecule type" value="Genomic_DNA"/>
</dbReference>
<dbReference type="EMBL" id="AC022537">
    <property type="protein sequence ID" value="CAI41305.1"/>
    <property type="status" value="JOINED"/>
    <property type="molecule type" value="Genomic_DNA"/>
</dbReference>
<dbReference type="EMBL" id="AL731537">
    <property type="protein sequence ID" value="CAI17115.1"/>
    <property type="molecule type" value="Genomic_DNA"/>
</dbReference>
<dbReference type="EMBL" id="AL928686">
    <property type="protein sequence ID" value="CAI17115.1"/>
    <property type="status" value="JOINED"/>
    <property type="molecule type" value="Genomic_DNA"/>
</dbReference>
<dbReference type="EMBL" id="AL391378">
    <property type="protein sequence ID" value="CAI17115.1"/>
    <property type="status" value="JOINED"/>
    <property type="molecule type" value="Genomic_DNA"/>
</dbReference>
<dbReference type="EMBL" id="AL157399">
    <property type="protein sequence ID" value="CAI17115.1"/>
    <property type="status" value="JOINED"/>
    <property type="molecule type" value="Genomic_DNA"/>
</dbReference>
<dbReference type="EMBL" id="AC027118">
    <property type="protein sequence ID" value="CAI17115.1"/>
    <property type="status" value="JOINED"/>
    <property type="molecule type" value="Genomic_DNA"/>
</dbReference>
<dbReference type="EMBL" id="AC026228">
    <property type="protein sequence ID" value="CAI17115.1"/>
    <property type="status" value="JOINED"/>
    <property type="molecule type" value="Genomic_DNA"/>
</dbReference>
<dbReference type="EMBL" id="AC022537">
    <property type="protein sequence ID" value="CAI17115.1"/>
    <property type="status" value="JOINED"/>
    <property type="molecule type" value="Genomic_DNA"/>
</dbReference>
<dbReference type="EMBL" id="AC022025">
    <property type="protein sequence ID" value="CAI17115.1"/>
    <property type="status" value="JOINED"/>
    <property type="molecule type" value="Genomic_DNA"/>
</dbReference>
<dbReference type="EMBL" id="AC009986">
    <property type="protein sequence ID" value="CAI17115.1"/>
    <property type="status" value="JOINED"/>
    <property type="molecule type" value="Genomic_DNA"/>
</dbReference>
<dbReference type="EMBL" id="AC068062">
    <property type="status" value="NOT_ANNOTATED_CDS"/>
    <property type="molecule type" value="Genomic_DNA"/>
</dbReference>
<dbReference type="EMBL" id="AC069079">
    <property type="status" value="NOT_ANNOTATED_CDS"/>
    <property type="molecule type" value="Genomic_DNA"/>
</dbReference>
<dbReference type="EMBL" id="AC073584">
    <property type="status" value="NOT_ANNOTATED_CDS"/>
    <property type="molecule type" value="Genomic_DNA"/>
</dbReference>
<dbReference type="EMBL" id="AL596105">
    <property type="status" value="NOT_ANNOTATED_CDS"/>
    <property type="molecule type" value="Genomic_DNA"/>
</dbReference>
<dbReference type="EMBL" id="AL607031">
    <property type="status" value="NOT_ANNOTATED_CDS"/>
    <property type="molecule type" value="Genomic_DNA"/>
</dbReference>
<dbReference type="EMBL" id="CH471083">
    <property type="protein sequence ID" value="EAW54140.1"/>
    <property type="molecule type" value="Genomic_DNA"/>
</dbReference>
<dbReference type="EMBL" id="BC062688">
    <property type="protein sequence ID" value="AAH62688.1"/>
    <property type="molecule type" value="mRNA"/>
</dbReference>
<dbReference type="EMBL" id="BC127090">
    <property type="protein sequence ID" value="AAI27091.1"/>
    <property type="molecule type" value="mRNA"/>
</dbReference>
<dbReference type="CCDS" id="CCDS44399.1">
    <molecule id="Q13976-1"/>
</dbReference>
<dbReference type="CCDS" id="CCDS7244.1">
    <molecule id="Q13976-2"/>
</dbReference>
<dbReference type="PIR" id="S05702">
    <property type="entry name" value="S05702"/>
</dbReference>
<dbReference type="RefSeq" id="NP_001091982.1">
    <molecule id="Q13976-1"/>
    <property type="nucleotide sequence ID" value="NM_001098512.3"/>
</dbReference>
<dbReference type="RefSeq" id="NP_006249.1">
    <molecule id="Q13976-2"/>
    <property type="nucleotide sequence ID" value="NM_006258.4"/>
</dbReference>
<dbReference type="PDB" id="1ZXA">
    <property type="method" value="NMR"/>
    <property type="chains" value="A/B=2-59"/>
</dbReference>
<dbReference type="PDB" id="3NMD">
    <property type="method" value="X-ray"/>
    <property type="resolution" value="2.27 A"/>
    <property type="chains" value="A/B/C/D/E=4-47"/>
</dbReference>
<dbReference type="PDB" id="3OCP">
    <property type="method" value="X-ray"/>
    <property type="resolution" value="2.49 A"/>
    <property type="chains" value="A/B=84-212"/>
</dbReference>
<dbReference type="PDB" id="3OD0">
    <property type="method" value="X-ray"/>
    <property type="resolution" value="2.90 A"/>
    <property type="chains" value="A/B=84-212"/>
</dbReference>
<dbReference type="PDB" id="3OGJ">
    <property type="method" value="X-ray"/>
    <property type="resolution" value="2.75 A"/>
    <property type="chains" value="A/B/C/D=84-212"/>
</dbReference>
<dbReference type="PDB" id="4KU7">
    <property type="method" value="X-ray"/>
    <property type="resolution" value="1.65 A"/>
    <property type="chains" value="A=204-354"/>
</dbReference>
<dbReference type="PDB" id="4KU8">
    <property type="method" value="X-ray"/>
    <property type="resolution" value="1.99 A"/>
    <property type="chains" value="A/B/C=204-354"/>
</dbReference>
<dbReference type="PDB" id="4QX5">
    <property type="method" value="X-ray"/>
    <property type="resolution" value="1.32 A"/>
    <property type="chains" value="A=204-354"/>
</dbReference>
<dbReference type="PDB" id="4QXK">
    <property type="method" value="Other"/>
    <property type="resolution" value="2.20 A"/>
    <property type="chains" value="A=204-354"/>
</dbReference>
<dbReference type="PDB" id="4R4L">
    <property type="method" value="X-ray"/>
    <property type="resolution" value="2.25 A"/>
    <property type="chains" value="A/B/C=2-48"/>
</dbReference>
<dbReference type="PDB" id="4R4M">
    <property type="method" value="X-ray"/>
    <property type="resolution" value="1.92 A"/>
    <property type="chains" value="A/B/C=2-48"/>
</dbReference>
<dbReference type="PDB" id="4Z07">
    <property type="method" value="X-ray"/>
    <property type="resolution" value="2.50 A"/>
    <property type="chains" value="A/C/E=84-336"/>
</dbReference>
<dbReference type="PDB" id="5J48">
    <property type="method" value="X-ray"/>
    <property type="resolution" value="1.49 A"/>
    <property type="chains" value="A/B=204-336"/>
</dbReference>
<dbReference type="PDB" id="5JAX">
    <property type="method" value="X-ray"/>
    <property type="resolution" value="1.49 A"/>
    <property type="chains" value="A=204-336"/>
</dbReference>
<dbReference type="PDB" id="5JD7">
    <property type="method" value="X-ray"/>
    <property type="resolution" value="1.75 A"/>
    <property type="chains" value="A=204-336"/>
</dbReference>
<dbReference type="PDB" id="5L0N">
    <property type="method" value="X-ray"/>
    <property type="resolution" value="1.28 A"/>
    <property type="chains" value="A=204-336"/>
</dbReference>
<dbReference type="PDB" id="6BDL">
    <property type="method" value="X-ray"/>
    <property type="resolution" value="1.96 A"/>
    <property type="chains" value="A/B=327-671"/>
</dbReference>
<dbReference type="PDB" id="6BG2">
    <property type="method" value="X-ray"/>
    <property type="resolution" value="1.83 A"/>
    <property type="chains" value="A/B/C/D=327-671"/>
</dbReference>
<dbReference type="PDB" id="6C0T">
    <property type="method" value="X-ray"/>
    <property type="resolution" value="1.98 A"/>
    <property type="chains" value="A=327-671"/>
</dbReference>
<dbReference type="PDB" id="7LV3">
    <property type="method" value="X-ray"/>
    <property type="resolution" value="2.41 A"/>
    <property type="chains" value="A/B=56-671"/>
</dbReference>
<dbReference type="PDB" id="7MBJ">
    <property type="method" value="X-ray"/>
    <property type="resolution" value="1.26 A"/>
    <property type="chains" value="A/B=79-212"/>
</dbReference>
<dbReference type="PDB" id="7SSB">
    <property type="method" value="X-ray"/>
    <property type="resolution" value="1.40 A"/>
    <property type="chains" value="A=78-328"/>
</dbReference>
<dbReference type="PDB" id="7T4T">
    <property type="method" value="X-ray"/>
    <property type="resolution" value="2.08 A"/>
    <property type="chains" value="A/B=204-671"/>
</dbReference>
<dbReference type="PDB" id="7T4U">
    <property type="method" value="X-ray"/>
    <property type="resolution" value="1.99 A"/>
    <property type="chains" value="A/B=204-671"/>
</dbReference>
<dbReference type="PDB" id="7T4V">
    <property type="method" value="X-ray"/>
    <property type="resolution" value="2.28 A"/>
    <property type="chains" value="A/B=204-671"/>
</dbReference>
<dbReference type="PDB" id="7T4W">
    <property type="method" value="X-ray"/>
    <property type="resolution" value="2.23 A"/>
    <property type="chains" value="A/B=204-671"/>
</dbReference>
<dbReference type="PDBsum" id="1ZXA"/>
<dbReference type="PDBsum" id="3NMD"/>
<dbReference type="PDBsum" id="3OCP"/>
<dbReference type="PDBsum" id="3OD0"/>
<dbReference type="PDBsum" id="3OGJ"/>
<dbReference type="PDBsum" id="4KU7"/>
<dbReference type="PDBsum" id="4KU8"/>
<dbReference type="PDBsum" id="4QX5"/>
<dbReference type="PDBsum" id="4QXK"/>
<dbReference type="PDBsum" id="4R4L"/>
<dbReference type="PDBsum" id="4R4M"/>
<dbReference type="PDBsum" id="4Z07"/>
<dbReference type="PDBsum" id="5J48"/>
<dbReference type="PDBsum" id="5JAX"/>
<dbReference type="PDBsum" id="5JD7"/>
<dbReference type="PDBsum" id="5L0N"/>
<dbReference type="PDBsum" id="6BDL"/>
<dbReference type="PDBsum" id="6BG2"/>
<dbReference type="PDBsum" id="6C0T"/>
<dbReference type="PDBsum" id="7LV3"/>
<dbReference type="PDBsum" id="7MBJ"/>
<dbReference type="PDBsum" id="7SSB"/>
<dbReference type="PDBsum" id="7T4T"/>
<dbReference type="PDBsum" id="7T4U"/>
<dbReference type="PDBsum" id="7T4V"/>
<dbReference type="PDBsum" id="7T4W"/>
<dbReference type="BMRB" id="Q13976"/>
<dbReference type="SMR" id="Q13976"/>
<dbReference type="BioGRID" id="111578">
    <property type="interactions" value="49"/>
</dbReference>
<dbReference type="CORUM" id="Q13976"/>
<dbReference type="DIP" id="DIP-41118N"/>
<dbReference type="DIP" id="DIP-46288N"/>
<dbReference type="FunCoup" id="Q13976">
    <property type="interactions" value="1688"/>
</dbReference>
<dbReference type="IntAct" id="Q13976">
    <property type="interactions" value="30"/>
</dbReference>
<dbReference type="MINT" id="Q13976"/>
<dbReference type="STRING" id="9606.ENSP00000363092"/>
<dbReference type="BindingDB" id="Q13976"/>
<dbReference type="ChEMBL" id="CHEMBL4273"/>
<dbReference type="DrugCentral" id="Q13976"/>
<dbReference type="GuidetoPHARMACOLOGY" id="1492"/>
<dbReference type="GlyCosmos" id="Q13976">
    <property type="glycosylation" value="1 site, 2 glycans"/>
</dbReference>
<dbReference type="GlyGen" id="Q13976">
    <property type="glycosylation" value="1 site, 2 O-linked glycans (1 site)"/>
</dbReference>
<dbReference type="iPTMnet" id="Q13976"/>
<dbReference type="MetOSite" id="Q13976"/>
<dbReference type="PhosphoSitePlus" id="Q13976"/>
<dbReference type="BioMuta" id="PRKG1"/>
<dbReference type="DMDM" id="6225588"/>
<dbReference type="CPTAC" id="CPTAC-2881"/>
<dbReference type="CPTAC" id="CPTAC-2882"/>
<dbReference type="jPOST" id="Q13976"/>
<dbReference type="MassIVE" id="Q13976"/>
<dbReference type="PaxDb" id="9606-ENSP00000363092"/>
<dbReference type="PeptideAtlas" id="Q13976"/>
<dbReference type="ProteomicsDB" id="59781">
    <molecule id="Q13976-1"/>
</dbReference>
<dbReference type="ProteomicsDB" id="59782">
    <molecule id="Q13976-2"/>
</dbReference>
<dbReference type="Pumba" id="Q13976"/>
<dbReference type="Antibodypedia" id="2108">
    <property type="antibodies" value="347 antibodies from 38 providers"/>
</dbReference>
<dbReference type="DNASU" id="5592"/>
<dbReference type="Ensembl" id="ENST00000373980.11">
    <molecule id="Q13976-2"/>
    <property type="protein sequence ID" value="ENSP00000363092.5"/>
    <property type="gene ID" value="ENSG00000185532.20"/>
</dbReference>
<dbReference type="Ensembl" id="ENST00000401604.8">
    <molecule id="Q13976-1"/>
    <property type="protein sequence ID" value="ENSP00000384200.4"/>
    <property type="gene ID" value="ENSG00000185532.20"/>
</dbReference>
<dbReference type="GeneID" id="5592"/>
<dbReference type="KEGG" id="hsa:5592"/>
<dbReference type="MANE-Select" id="ENST00000373980.11">
    <molecule id="Q13976-2"/>
    <property type="protein sequence ID" value="ENSP00000363092.5"/>
    <property type="RefSeq nucleotide sequence ID" value="NM_006258.4"/>
    <property type="RefSeq protein sequence ID" value="NP_006249.1"/>
</dbReference>
<dbReference type="UCSC" id="uc001jjo.4">
    <molecule id="Q13976-1"/>
    <property type="organism name" value="human"/>
</dbReference>
<dbReference type="AGR" id="HGNC:9414"/>
<dbReference type="CTD" id="5592"/>
<dbReference type="DisGeNET" id="5592"/>
<dbReference type="GeneCards" id="PRKG1"/>
<dbReference type="HGNC" id="HGNC:9414">
    <property type="gene designation" value="PRKG1"/>
</dbReference>
<dbReference type="HPA" id="ENSG00000185532">
    <property type="expression patterns" value="Tissue enhanced (tongue)"/>
</dbReference>
<dbReference type="MalaCards" id="PRKG1"/>
<dbReference type="MIM" id="176894">
    <property type="type" value="gene"/>
</dbReference>
<dbReference type="MIM" id="615436">
    <property type="type" value="phenotype"/>
</dbReference>
<dbReference type="neXtProt" id="NX_Q13976"/>
<dbReference type="OpenTargets" id="ENSG00000185532"/>
<dbReference type="Orphanet" id="91387">
    <property type="disease" value="Familial thoracic aortic aneurysm and aortic dissection"/>
</dbReference>
<dbReference type="PharmGKB" id="PA33777"/>
<dbReference type="VEuPathDB" id="HostDB:ENSG00000185532"/>
<dbReference type="eggNOG" id="KOG0614">
    <property type="taxonomic scope" value="Eukaryota"/>
</dbReference>
<dbReference type="GeneTree" id="ENSGT00940000154704"/>
<dbReference type="HOGENOM" id="CLU_000288_73_2_1"/>
<dbReference type="InParanoid" id="Q13976"/>
<dbReference type="OMA" id="ESCLADC"/>
<dbReference type="OrthoDB" id="63267at2759"/>
<dbReference type="PAN-GO" id="Q13976">
    <property type="GO annotations" value="0 GO annotations based on evolutionary models"/>
</dbReference>
<dbReference type="PhylomeDB" id="Q13976"/>
<dbReference type="TreeFam" id="TF313261"/>
<dbReference type="BRENDA" id="2.7.11.12">
    <property type="organism ID" value="2681"/>
</dbReference>
<dbReference type="PathwayCommons" id="Q13976"/>
<dbReference type="Reactome" id="R-HSA-392517">
    <molecule id="Q13976-1"/>
    <property type="pathway name" value="Rap1 signalling"/>
</dbReference>
<dbReference type="Reactome" id="R-HSA-4086398">
    <property type="pathway name" value="Ca2+ pathway"/>
</dbReference>
<dbReference type="Reactome" id="R-HSA-418457">
    <molecule id="Q13976-1"/>
    <property type="pathway name" value="cGMP effects"/>
</dbReference>
<dbReference type="SABIO-RK" id="Q13976"/>
<dbReference type="SignaLink" id="Q13976"/>
<dbReference type="SIGNOR" id="Q13976"/>
<dbReference type="BioGRID-ORCS" id="5592">
    <property type="hits" value="19 hits in 1186 CRISPR screens"/>
</dbReference>
<dbReference type="ChiTaRS" id="PRKG1">
    <property type="organism name" value="human"/>
</dbReference>
<dbReference type="EvolutionaryTrace" id="Q13976"/>
<dbReference type="GeneWiki" id="PRKG1"/>
<dbReference type="GenomeRNAi" id="5592"/>
<dbReference type="Pharos" id="Q13976">
    <property type="development level" value="Tchem"/>
</dbReference>
<dbReference type="PRO" id="PR:Q13976"/>
<dbReference type="Proteomes" id="UP000005640">
    <property type="component" value="Chromosome 10"/>
</dbReference>
<dbReference type="RNAct" id="Q13976">
    <property type="molecule type" value="protein"/>
</dbReference>
<dbReference type="Bgee" id="ENSG00000185532">
    <property type="expression patterns" value="Expressed in saphenous vein and 172 other cell types or tissues"/>
</dbReference>
<dbReference type="ExpressionAtlas" id="Q13976">
    <property type="expression patterns" value="baseline and differential"/>
</dbReference>
<dbReference type="GO" id="GO:0001669">
    <property type="term" value="C:acrosomal vesicle"/>
    <property type="evidence" value="ECO:0007669"/>
    <property type="project" value="Ensembl"/>
</dbReference>
<dbReference type="GO" id="GO:0005737">
    <property type="term" value="C:cytoplasm"/>
    <property type="evidence" value="ECO:0000314"/>
    <property type="project" value="UniProtKB"/>
</dbReference>
<dbReference type="GO" id="GO:0005829">
    <property type="term" value="C:cytosol"/>
    <property type="evidence" value="ECO:0000304"/>
    <property type="project" value="Reactome"/>
</dbReference>
<dbReference type="GO" id="GO:0005794">
    <property type="term" value="C:Golgi apparatus"/>
    <property type="evidence" value="ECO:0007669"/>
    <property type="project" value="Ensembl"/>
</dbReference>
<dbReference type="GO" id="GO:0005654">
    <property type="term" value="C:nucleoplasm"/>
    <property type="evidence" value="ECO:0007669"/>
    <property type="project" value="Ensembl"/>
</dbReference>
<dbReference type="GO" id="GO:0005886">
    <property type="term" value="C:plasma membrane"/>
    <property type="evidence" value="ECO:0000314"/>
    <property type="project" value="UniProtKB"/>
</dbReference>
<dbReference type="GO" id="GO:0042383">
    <property type="term" value="C:sarcolemma"/>
    <property type="evidence" value="ECO:0007669"/>
    <property type="project" value="Ensembl"/>
</dbReference>
<dbReference type="GO" id="GO:0005524">
    <property type="term" value="F:ATP binding"/>
    <property type="evidence" value="ECO:0007669"/>
    <property type="project" value="UniProtKB-KW"/>
</dbReference>
<dbReference type="GO" id="GO:0005246">
    <property type="term" value="F:calcium channel regulator activity"/>
    <property type="evidence" value="ECO:0000314"/>
    <property type="project" value="UniProtKB"/>
</dbReference>
<dbReference type="GO" id="GO:0030553">
    <property type="term" value="F:cGMP binding"/>
    <property type="evidence" value="ECO:0007669"/>
    <property type="project" value="UniProtKB-KW"/>
</dbReference>
<dbReference type="GO" id="GO:0004692">
    <property type="term" value="F:cGMP-dependent protein kinase activity"/>
    <property type="evidence" value="ECO:0000314"/>
    <property type="project" value="UniProtKB"/>
</dbReference>
<dbReference type="GO" id="GO:0042802">
    <property type="term" value="F:identical protein binding"/>
    <property type="evidence" value="ECO:0000353"/>
    <property type="project" value="IntAct"/>
</dbReference>
<dbReference type="GO" id="GO:0048273">
    <property type="term" value="F:mitogen-activated protein kinase p38 binding"/>
    <property type="evidence" value="ECO:0007669"/>
    <property type="project" value="Ensembl"/>
</dbReference>
<dbReference type="GO" id="GO:0004672">
    <property type="term" value="F:protein kinase activity"/>
    <property type="evidence" value="ECO:0000315"/>
    <property type="project" value="BHF-UCL"/>
</dbReference>
<dbReference type="GO" id="GO:0106310">
    <property type="term" value="F:protein serine kinase activity"/>
    <property type="evidence" value="ECO:0007669"/>
    <property type="project" value="RHEA"/>
</dbReference>
<dbReference type="GO" id="GO:0030036">
    <property type="term" value="P:actin cytoskeleton organization"/>
    <property type="evidence" value="ECO:0000304"/>
    <property type="project" value="ProtInc"/>
</dbReference>
<dbReference type="GO" id="GO:0061049">
    <property type="term" value="P:cell growth involved in cardiac muscle cell development"/>
    <property type="evidence" value="ECO:0007669"/>
    <property type="project" value="Ensembl"/>
</dbReference>
<dbReference type="GO" id="GO:0021549">
    <property type="term" value="P:cerebellum development"/>
    <property type="evidence" value="ECO:0007669"/>
    <property type="project" value="Ensembl"/>
</dbReference>
<dbReference type="GO" id="GO:0019934">
    <property type="term" value="P:cGMP-mediated signaling"/>
    <property type="evidence" value="ECO:0007669"/>
    <property type="project" value="Ensembl"/>
</dbReference>
<dbReference type="GO" id="GO:0048668">
    <property type="term" value="P:collateral sprouting"/>
    <property type="evidence" value="ECO:0007669"/>
    <property type="project" value="Ensembl"/>
</dbReference>
<dbReference type="GO" id="GO:0016358">
    <property type="term" value="P:dendrite development"/>
    <property type="evidence" value="ECO:0007669"/>
    <property type="project" value="Ensembl"/>
</dbReference>
<dbReference type="GO" id="GO:0030900">
    <property type="term" value="P:forebrain development"/>
    <property type="evidence" value="ECO:0007669"/>
    <property type="project" value="Ensembl"/>
</dbReference>
<dbReference type="GO" id="GO:0014050">
    <property type="term" value="P:negative regulation of glutamate secretion"/>
    <property type="evidence" value="ECO:0007669"/>
    <property type="project" value="Ensembl"/>
</dbReference>
<dbReference type="GO" id="GO:0010920">
    <property type="term" value="P:negative regulation of inositol phosphate biosynthetic process"/>
    <property type="evidence" value="ECO:0007669"/>
    <property type="project" value="Ensembl"/>
</dbReference>
<dbReference type="GO" id="GO:0090331">
    <property type="term" value="P:negative regulation of platelet aggregation"/>
    <property type="evidence" value="ECO:0000315"/>
    <property type="project" value="UniProtKB"/>
</dbReference>
<dbReference type="GO" id="GO:1904753">
    <property type="term" value="P:negative regulation of vascular associated smooth muscle cell migration"/>
    <property type="evidence" value="ECO:0000314"/>
    <property type="project" value="BHF-UCL"/>
</dbReference>
<dbReference type="GO" id="GO:1904706">
    <property type="term" value="P:negative regulation of vascular associated smooth muscle cell proliferation"/>
    <property type="evidence" value="ECO:0000314"/>
    <property type="project" value="BHF-UCL"/>
</dbReference>
<dbReference type="GO" id="GO:0001764">
    <property type="term" value="P:neuron migration"/>
    <property type="evidence" value="ECO:0007669"/>
    <property type="project" value="Ensembl"/>
</dbReference>
<dbReference type="GO" id="GO:0042753">
    <property type="term" value="P:positive regulation of circadian rhythm"/>
    <property type="evidence" value="ECO:0007669"/>
    <property type="project" value="Ensembl"/>
</dbReference>
<dbReference type="GO" id="GO:0007204">
    <property type="term" value="P:positive regulation of cytosolic calcium ion concentration"/>
    <property type="evidence" value="ECO:0007669"/>
    <property type="project" value="Ensembl"/>
</dbReference>
<dbReference type="GO" id="GO:0006468">
    <property type="term" value="P:protein phosphorylation"/>
    <property type="evidence" value="ECO:0000304"/>
    <property type="project" value="ProtInc"/>
</dbReference>
<dbReference type="GO" id="GO:0043087">
    <property type="term" value="P:regulation of GTPase activity"/>
    <property type="evidence" value="ECO:0000315"/>
    <property type="project" value="UniProtKB"/>
</dbReference>
<dbReference type="GO" id="GO:2000224">
    <property type="term" value="P:regulation of testosterone biosynthetic process"/>
    <property type="evidence" value="ECO:0007669"/>
    <property type="project" value="Ensembl"/>
</dbReference>
<dbReference type="GO" id="GO:0060087">
    <property type="term" value="P:relaxation of vascular associated smooth muscle"/>
    <property type="evidence" value="ECO:0007669"/>
    <property type="project" value="Ensembl"/>
</dbReference>
<dbReference type="GO" id="GO:0007165">
    <property type="term" value="P:signal transduction"/>
    <property type="evidence" value="ECO:0000318"/>
    <property type="project" value="GO_Central"/>
</dbReference>
<dbReference type="GO" id="GO:0007286">
    <property type="term" value="P:spermatid development"/>
    <property type="evidence" value="ECO:0007669"/>
    <property type="project" value="Ensembl"/>
</dbReference>
<dbReference type="CDD" id="cd00038">
    <property type="entry name" value="CAP_ED"/>
    <property type="match status" value="2"/>
</dbReference>
<dbReference type="CDD" id="cd12085">
    <property type="entry name" value="DD_cGKI-alpha"/>
    <property type="match status" value="1"/>
</dbReference>
<dbReference type="CDD" id="cd05572">
    <property type="entry name" value="STKc_cGK"/>
    <property type="match status" value="1"/>
</dbReference>
<dbReference type="FunFam" id="3.30.200.20:FF:000005">
    <property type="entry name" value="cAMP-dependent protein kinase catalytic subunit"/>
    <property type="match status" value="1"/>
</dbReference>
<dbReference type="FunFam" id="1.10.510.10:FF:000096">
    <property type="entry name" value="cGMP-dependent protein kinase"/>
    <property type="match status" value="1"/>
</dbReference>
<dbReference type="FunFam" id="2.60.120.10:FF:000035">
    <property type="entry name" value="cGMP-dependent protein kinase"/>
    <property type="match status" value="1"/>
</dbReference>
<dbReference type="FunFam" id="2.60.120.10:FF:000037">
    <property type="entry name" value="cGMP-dependent protein kinase"/>
    <property type="match status" value="1"/>
</dbReference>
<dbReference type="FunFam" id="1.20.5.490:FF:000006">
    <property type="entry name" value="cGMP-dependent protein kinase 1"/>
    <property type="match status" value="1"/>
</dbReference>
<dbReference type="Gene3D" id="2.60.120.10">
    <property type="entry name" value="Jelly Rolls"/>
    <property type="match status" value="2"/>
</dbReference>
<dbReference type="Gene3D" id="3.30.200.20">
    <property type="entry name" value="Phosphorylase Kinase, domain 1"/>
    <property type="match status" value="1"/>
</dbReference>
<dbReference type="Gene3D" id="1.20.5.490">
    <property type="entry name" value="Single helix bin"/>
    <property type="match status" value="1"/>
</dbReference>
<dbReference type="Gene3D" id="1.10.510.10">
    <property type="entry name" value="Transferase(Phosphotransferase) domain 1"/>
    <property type="match status" value="1"/>
</dbReference>
<dbReference type="InterPro" id="IPR000961">
    <property type="entry name" value="AGC-kinase_C"/>
</dbReference>
<dbReference type="InterPro" id="IPR002374">
    <property type="entry name" value="cGMP_dep_kinase"/>
</dbReference>
<dbReference type="InterPro" id="IPR018488">
    <property type="entry name" value="cNMP-bd_CS"/>
</dbReference>
<dbReference type="InterPro" id="IPR000595">
    <property type="entry name" value="cNMP-bd_dom"/>
</dbReference>
<dbReference type="InterPro" id="IPR018490">
    <property type="entry name" value="cNMP-bd_dom_sf"/>
</dbReference>
<dbReference type="InterPro" id="IPR011009">
    <property type="entry name" value="Kinase-like_dom_sf"/>
</dbReference>
<dbReference type="InterPro" id="IPR031831">
    <property type="entry name" value="PKcGMP_CC"/>
</dbReference>
<dbReference type="InterPro" id="IPR000719">
    <property type="entry name" value="Prot_kinase_dom"/>
</dbReference>
<dbReference type="InterPro" id="IPR017441">
    <property type="entry name" value="Protein_kinase_ATP_BS"/>
</dbReference>
<dbReference type="InterPro" id="IPR014710">
    <property type="entry name" value="RmlC-like_jellyroll"/>
</dbReference>
<dbReference type="InterPro" id="IPR008271">
    <property type="entry name" value="Ser/Thr_kinase_AS"/>
</dbReference>
<dbReference type="InterPro" id="IPR035014">
    <property type="entry name" value="STKc_cGK"/>
</dbReference>
<dbReference type="PANTHER" id="PTHR24353:SF68">
    <property type="match status" value="1"/>
</dbReference>
<dbReference type="PANTHER" id="PTHR24353">
    <property type="entry name" value="CYCLIC NUCLEOTIDE-DEPENDENT PROTEIN KINASE"/>
    <property type="match status" value="1"/>
</dbReference>
<dbReference type="Pfam" id="PF00027">
    <property type="entry name" value="cNMP_binding"/>
    <property type="match status" value="2"/>
</dbReference>
<dbReference type="Pfam" id="PF16808">
    <property type="entry name" value="PKcGMP_CC"/>
    <property type="match status" value="1"/>
</dbReference>
<dbReference type="Pfam" id="PF00069">
    <property type="entry name" value="Pkinase"/>
    <property type="match status" value="1"/>
</dbReference>
<dbReference type="PIRSF" id="PIRSF000559">
    <property type="entry name" value="cGMP-dep_kinase"/>
    <property type="match status" value="1"/>
</dbReference>
<dbReference type="PRINTS" id="PR00104">
    <property type="entry name" value="CGMPKINASE"/>
</dbReference>
<dbReference type="SMART" id="SM00100">
    <property type="entry name" value="cNMP"/>
    <property type="match status" value="2"/>
</dbReference>
<dbReference type="SMART" id="SM00133">
    <property type="entry name" value="S_TK_X"/>
    <property type="match status" value="1"/>
</dbReference>
<dbReference type="SMART" id="SM00220">
    <property type="entry name" value="S_TKc"/>
    <property type="match status" value="1"/>
</dbReference>
<dbReference type="SUPFAM" id="SSF51206">
    <property type="entry name" value="cAMP-binding domain-like"/>
    <property type="match status" value="2"/>
</dbReference>
<dbReference type="SUPFAM" id="SSF56112">
    <property type="entry name" value="Protein kinase-like (PK-like)"/>
    <property type="match status" value="1"/>
</dbReference>
<dbReference type="PROSITE" id="PS51285">
    <property type="entry name" value="AGC_KINASE_CTER"/>
    <property type="match status" value="1"/>
</dbReference>
<dbReference type="PROSITE" id="PS00888">
    <property type="entry name" value="CNMP_BINDING_1"/>
    <property type="match status" value="2"/>
</dbReference>
<dbReference type="PROSITE" id="PS00889">
    <property type="entry name" value="CNMP_BINDING_2"/>
    <property type="match status" value="2"/>
</dbReference>
<dbReference type="PROSITE" id="PS50042">
    <property type="entry name" value="CNMP_BINDING_3"/>
    <property type="match status" value="2"/>
</dbReference>
<dbReference type="PROSITE" id="PS00107">
    <property type="entry name" value="PROTEIN_KINASE_ATP"/>
    <property type="match status" value="1"/>
</dbReference>
<dbReference type="PROSITE" id="PS50011">
    <property type="entry name" value="PROTEIN_KINASE_DOM"/>
    <property type="match status" value="1"/>
</dbReference>
<dbReference type="PROSITE" id="PS00108">
    <property type="entry name" value="PROTEIN_KINASE_ST"/>
    <property type="match status" value="1"/>
</dbReference>
<sequence length="671" mass="76364">MSELEEDFAKILMLKEERIKELEKRLSEKEEEIQELKRKLHKCQSVLPVPSTHIGPRTTRAQGISAEPQTYRSFHDLRQAFRKFTKSERSKDLIKEAILDNDFMKNLELSQIQEIVDCMYPVEYGKDSCIIKEGDVGSLVYVMEDGKVEVTKEGVKLCTMGPGKVFGELAILYNCTRTATVKTLVNVKLWAIDRQCFQTIMMRTGLIKHTEYMEFLKSVPTFQSLPEEILSKLADVLEETHYENGEYIIRQGARGDTFFIISKGTVNVTREDSPSEDPVFLRTLGKGDWFGEKALQGEDVRTANVIAAEAVTCLVIDRDSFKHLIGGLDDVSNKAYEDAEAKAKYEAEAAFFANLKLSDFNIIDTLGVGGFGRVELVQLKSEESKTFAMKILKKRHIVDTRQQEHIRSEKQIMQGAHSDFIVRLYRTFKDSKYLYMLMEACLGGELWTILRDRGSFEDSTTRFYTACVVEAFAYLHSKGIIYRDLKPENLILDHRGYAKLVDFGFAKKIGFGKKTWTFCGTPEYVAPEIILNKGHDISADYWSLGILMYELLTGSPPFSGPDPMKTYNIILRGIDMIEFPKKIAKNAANLIKKLCRDNPSERLGNLKNGVKDIQKHKWFEGFNWEGLRKGTLTPPIIPSVASPTDTSNFDSFPEDNDEPPPDDNSGWDIDF</sequence>
<comment type="function">
    <text evidence="8 9 10 11 12 13 15 25">Serine/threonine protein kinase that acts as a key mediator of the nitric oxide (NO)/cGMP signaling pathway. GMP binding activates PRKG1, which phosphorylates serines and threonines on many cellular proteins. Numerous protein targets for PRKG1 phosphorylation are implicated in modulating cellular calcium, but the contribution of each of these targets may vary substantially among cell types. Proteins that are phosphorylated by PRKG1 regulate platelet activation and adhesion, smooth muscle contraction, cardiac function, gene expression, feedback of the NO-signaling pathway, and other processes involved in several aspects of the CNS like axon guidance, hippocampal and cerebellar learning, circadian rhythm and nociception. Smooth muscle relaxation is mediated through lowering of intracellular free calcium, by desensitization of contractile proteins to calcium, and by decrease in the contractile state of smooth muscle or in platelet activation. Regulates intracellular calcium levels via several pathways: phosphorylates IRAG1 and inhibits IP3-induced Ca(2+) release from intracellular stores, phosphorylation of KCNMA1 (BKCa) channels decreases intracellular Ca(2+) levels, which leads to increased opening of this channel. PRKG1 phosphorylates the canonical transient receptor potential channel (TRPC) family which inactivates the associated inward calcium current. Another mode of action of NO/cGMP/PKGI signaling involves PKGI-mediated inactivation of the Ras homolog gene family member A (RhoA). Phosphorylation of RHOA by PRKG1 blocks the action of this protein in myriad processes: regulation of RHOA translocation; decreasing contraction; controlling vesicle trafficking, reduction of myosin light chain phosphorylation resulting in vasorelaxation. Activation of PRKG1 by NO signaling also alters gene expression in a number of tissues. In smooth muscle cells, increased cGMP and PRKG1 activity influence expression of smooth muscle-specific contractile proteins, levels of proteins in the NO/cGMP signaling pathway, down-regulation of the matrix proteins osteopontin and thrombospondin-1 to limit smooth muscle cell migration and phenotype. Regulates vasodilator-stimulated phosphoprotein (VASP) functions in platelets and smooth muscle.</text>
</comment>
<comment type="catalytic activity">
    <reaction>
        <text>L-seryl-[protein] + ATP = O-phospho-L-seryl-[protein] + ADP + H(+)</text>
        <dbReference type="Rhea" id="RHEA:17989"/>
        <dbReference type="Rhea" id="RHEA-COMP:9863"/>
        <dbReference type="Rhea" id="RHEA-COMP:11604"/>
        <dbReference type="ChEBI" id="CHEBI:15378"/>
        <dbReference type="ChEBI" id="CHEBI:29999"/>
        <dbReference type="ChEBI" id="CHEBI:30616"/>
        <dbReference type="ChEBI" id="CHEBI:83421"/>
        <dbReference type="ChEBI" id="CHEBI:456216"/>
        <dbReference type="EC" id="2.7.11.12"/>
    </reaction>
</comment>
<comment type="catalytic activity">
    <reaction>
        <text>L-threonyl-[protein] + ATP = O-phospho-L-threonyl-[protein] + ADP + H(+)</text>
        <dbReference type="Rhea" id="RHEA:46608"/>
        <dbReference type="Rhea" id="RHEA-COMP:11060"/>
        <dbReference type="Rhea" id="RHEA-COMP:11605"/>
        <dbReference type="ChEBI" id="CHEBI:15378"/>
        <dbReference type="ChEBI" id="CHEBI:30013"/>
        <dbReference type="ChEBI" id="CHEBI:30616"/>
        <dbReference type="ChEBI" id="CHEBI:61977"/>
        <dbReference type="ChEBI" id="CHEBI:456216"/>
        <dbReference type="EC" id="2.7.11.12"/>
    </reaction>
</comment>
<comment type="activity regulation">
    <text>In the absence of cGMP, PRKG1 activity is suppressed by autoinhibitory contacts.</text>
</comment>
<comment type="subunit">
    <text evidence="1 8 11 12 14 15 17 18 19 20">Isoform alpha: parallel homodimer or heterodimer and also heterotetramer. Interacts directly with PPP1R12A. Non-covalent dimer of dimer of PRKG1-PRKG1 and PPP1R12A-PPP1R12A. This interaction targets PRKG1 to stress fibers to mediate smooth muscle cell relaxation and vasodilation in responses to rises in cGMP. Isoform beta: antiparallel homodimer. Part of cGMP kinase signaling complex at least composed of ACTA2/alpha-actin, CNN1/calponin H1, PLN/phospholamban, PRKG1 and ITPR1 (By similarity). Interacts with IRAG1. Forms a stable complex with ITPR1, IRAG1, and isoform beta of PRKG1. Interacts with TRPC7 (via ankyrin repeat domain). Isoform alpha interacts with RGS2. Interacts with GTF2I.</text>
</comment>
<comment type="interaction">
    <interactant intactId="EBI-3952014">
        <id>Q13976</id>
    </interactant>
    <interactant intactId="EBI-527196">
        <id>Q13873</id>
        <label>BMPR2</label>
    </interactant>
    <organismsDiffer>false</organismsDiffer>
    <experiments>2</experiments>
</comment>
<comment type="interaction">
    <interactant intactId="EBI-3952014">
        <id>Q13976</id>
    </interactant>
    <interactant intactId="EBI-744506">
        <id>Q86V42</id>
        <label>FAM124A</label>
    </interactant>
    <organismsDiffer>false</organismsDiffer>
    <experiments>4</experiments>
</comment>
<comment type="interaction">
    <interactant intactId="EBI-3952014">
        <id>Q13976</id>
    </interactant>
    <interactant intactId="EBI-739696">
        <id>P25791</id>
        <label>LMO2</label>
    </interactant>
    <organismsDiffer>false</organismsDiffer>
    <experiments>4</experiments>
</comment>
<comment type="interaction">
    <interactant intactId="EBI-3952014">
        <id>Q13976</id>
    </interactant>
    <interactant intactId="EBI-9023531">
        <id>O76074</id>
        <label>PDE5A</label>
    </interactant>
    <organismsDiffer>false</organismsDiffer>
    <experiments>4</experiments>
</comment>
<comment type="interaction">
    <interactant intactId="EBI-3952014">
        <id>Q13976</id>
    </interactant>
    <interactant intactId="EBI-745608">
        <id>O15015</id>
        <label>ZNF646</label>
    </interactant>
    <organismsDiffer>false</organismsDiffer>
    <experiments>4</experiments>
</comment>
<comment type="interaction">
    <interactant intactId="EBI-4280187">
        <id>Q13976-2</id>
    </interactant>
    <interactant intactId="EBI-740691">
        <id>O94989</id>
        <label>ARHGEF15</label>
    </interactant>
    <organismsDiffer>false</organismsDiffer>
    <experiments>3</experiments>
</comment>
<comment type="interaction">
    <interactant intactId="EBI-4280187">
        <id>Q13976-2</id>
    </interactant>
    <interactant intactId="EBI-11959475">
        <id>P25791-3</id>
        <label>LMO2</label>
    </interactant>
    <organismsDiffer>false</organismsDiffer>
    <experiments>3</experiments>
</comment>
<comment type="interaction">
    <interactant intactId="EBI-4280187">
        <id>Q13976-2</id>
    </interactant>
    <interactant intactId="EBI-16439278">
        <id>Q6FHY5</id>
        <label>MEOX2</label>
    </interactant>
    <organismsDiffer>false</organismsDiffer>
    <experiments>3</experiments>
</comment>
<comment type="interaction">
    <interactant intactId="EBI-4280187">
        <id>Q13976-2</id>
    </interactant>
    <interactant intactId="EBI-4280187">
        <id>Q13976-2</id>
        <label>PRKG1</label>
    </interactant>
    <organismsDiffer>false</organismsDiffer>
    <experiments>3</experiments>
</comment>
<comment type="interaction">
    <interactant intactId="EBI-4280187">
        <id>Q13976-2</id>
    </interactant>
    <interactant intactId="EBI-1210429">
        <id>Q9NYW8</id>
        <label>RBAK</label>
    </interactant>
    <organismsDiffer>false</organismsDiffer>
    <experiments>3</experiments>
</comment>
<comment type="subcellular location">
    <subcellularLocation>
        <location evidence="1">Cytoplasm</location>
    </subcellularLocation>
    <text evidence="1">Colocalized with TRPC7 in the plasma membrane.</text>
</comment>
<comment type="alternative products">
    <event type="alternative splicing"/>
    <isoform>
        <id>Q13976-1</id>
        <name>Alpha</name>
        <name>CGK1-alpha</name>
        <sequence type="displayed"/>
    </isoform>
    <isoform>
        <id>Q13976-2</id>
        <id>P14619-1</id>
        <name>Beta</name>
        <name>CGK1-beta</name>
        <sequence type="described" ref="VSP_038714"/>
    </isoform>
    <isoform>
        <id>Q13976-3</id>
        <name>3</name>
        <sequence type="described" ref="VSP_055541 VSP_055542"/>
    </isoform>
</comment>
<comment type="tissue specificity">
    <text evidence="26">Primarily expressed in lung and placenta.</text>
</comment>
<comment type="domain">
    <text>Composed of an N-terminal leucine-zipper domain followed by an autoinhibitory domain, which mediate homodimer formation and inhibit kinase activity, respectively. Next, two cGMP-binding domains are followed by the catalytic domain at the C-terminus. Binding of cGMP to cGMP-binding domains results in a conformational change that activates kinase activity by removing the autoinhibitory domain from the catalytic cleft leaving the catalytic domain free to phosphorylate downstream substrates. Isoforms alpha and beta have identical cGMP-binding and catalytic domains but differ in their leucine zipper and autoinhibitory sequences and therefore differ in their dimerization substrates and kinase enzyme activity.</text>
</comment>
<comment type="domain">
    <text>Heterotetramerization is mediated by the interaction between a coiled-coil of PRKG1 and the leucine/isoleucine zipper of PPP1R12A/MBS, the myosin-binding subunit of the myosin phosphatase.</text>
</comment>
<comment type="PTM">
    <text>Autophosphorylation increases kinase activity.</text>
</comment>
<comment type="PTM">
    <text evidence="1">65 kDa monomer is produced by proteolytic cleavage.</text>
</comment>
<comment type="disease" evidence="22">
    <disease id="DI-03894">
        <name>Aortic aneurysm, familial thoracic 8</name>
        <acronym>AAT8</acronym>
        <description>A disease characterized by permanent dilation of the thoracic aorta usually due to degenerative changes in the aortic wall. It is primarily associated with a characteristic histologic appearance known as 'medial necrosis' or 'Erdheim cystic medial necrosis' in which there is degeneration and fragmentation of elastic fibers, loss of smooth muscle cells, and an accumulation of basophilic ground substance.</description>
        <dbReference type="MIM" id="615436"/>
    </disease>
    <text>The disease is caused by variants affecting the gene represented in this entry.</text>
</comment>
<comment type="miscellaneous">
    <text evidence="24">The 3D structures in complex with cGMP and cAMP describe the hydrogen bonding interactions that modulate high selectivity for cGMP in the CNB-B domain, and reveal that all these contacts are disrupted in the structure with cAMP, explaining the low affinity of the enzyme for cAMP and the fact that cAMP can only weakly activate PKG.</text>
</comment>
<comment type="similarity">
    <text evidence="31">Belongs to the protein kinase superfamily. AGC Ser/Thr protein kinase family. cGMP subfamily.</text>
</comment>
<feature type="initiator methionine" description="Removed" evidence="40">
    <location>
        <position position="1"/>
    </location>
</feature>
<feature type="chain" id="PRO_0000086115" description="cGMP-dependent protein kinase 1">
    <location>
        <begin position="2"/>
        <end position="671"/>
    </location>
</feature>
<feature type="domain" description="Protein kinase" evidence="4">
    <location>
        <begin position="360"/>
        <end position="619"/>
    </location>
</feature>
<feature type="domain" description="AGC-kinase C-terminal" evidence="5">
    <location>
        <begin position="620"/>
        <end position="671"/>
    </location>
</feature>
<feature type="region of interest" description="Required for dimerization">
    <location>
        <begin position="2"/>
        <end position="102"/>
    </location>
</feature>
<feature type="region of interest" description="Leucine-zipper">
    <location>
        <begin position="9"/>
        <end position="44"/>
    </location>
</feature>
<feature type="region of interest" description="Autoinhibitory domain" evidence="1">
    <location>
        <begin position="50"/>
        <end position="75"/>
    </location>
</feature>
<feature type="region of interest" description="cGMP-binding, high affinity">
    <location>
        <begin position="103"/>
        <end position="220"/>
    </location>
</feature>
<feature type="region of interest" description="cGMP-binding, low affinity">
    <location>
        <begin position="221"/>
        <end position="341"/>
    </location>
</feature>
<feature type="region of interest" description="Disordered" evidence="7">
    <location>
        <begin position="635"/>
        <end position="671"/>
    </location>
</feature>
<feature type="coiled-coil region" evidence="14">
    <location>
        <begin position="2"/>
        <end position="59"/>
    </location>
</feature>
<feature type="compositionally biased region" description="Acidic residues" evidence="7">
    <location>
        <begin position="652"/>
        <end position="661"/>
    </location>
</feature>
<feature type="active site" description="Proton acceptor" evidence="4 6">
    <location>
        <position position="484"/>
    </location>
</feature>
<feature type="binding site" evidence="21 33 35">
    <location>
        <begin position="167"/>
        <end position="170"/>
    </location>
    <ligand>
        <name>3',5'-cyclic AMP</name>
        <dbReference type="ChEBI" id="CHEBI:58165"/>
        <label>1</label>
    </ligand>
</feature>
<feature type="binding site" evidence="21 34">
    <location>
        <begin position="167"/>
        <end position="170"/>
    </location>
    <ligand>
        <name>3',5'-cyclic GMP</name>
        <dbReference type="ChEBI" id="CHEBI:57746"/>
        <label>1</label>
    </ligand>
</feature>
<feature type="binding site" evidence="21 33 35">
    <location>
        <begin position="177"/>
        <end position="178"/>
    </location>
    <ligand>
        <name>3',5'-cyclic AMP</name>
        <dbReference type="ChEBI" id="CHEBI:58165"/>
        <label>1</label>
    </ligand>
</feature>
<feature type="binding site" evidence="21 34">
    <location>
        <begin position="177"/>
        <end position="178"/>
    </location>
    <ligand>
        <name>3',5'-cyclic GMP</name>
        <dbReference type="ChEBI" id="CHEBI:57746"/>
        <label>1</label>
    </ligand>
</feature>
<feature type="binding site" evidence="23 24 36 39">
    <location>
        <position position="282"/>
    </location>
    <ligand>
        <name>3',5'-cyclic GMP</name>
        <dbReference type="ChEBI" id="CHEBI:57746"/>
        <label>2</label>
    </ligand>
</feature>
<feature type="binding site" evidence="24 38">
    <location>
        <begin position="291"/>
        <end position="294"/>
    </location>
    <ligand>
        <name>3',5'-cyclic AMP</name>
        <dbReference type="ChEBI" id="CHEBI:58165"/>
        <label>2</label>
    </ligand>
</feature>
<feature type="binding site" evidence="23 24 36 39">
    <location>
        <begin position="291"/>
        <end position="294"/>
    </location>
    <ligand>
        <name>3',5'-cyclic GMP</name>
        <dbReference type="ChEBI" id="CHEBI:57746"/>
        <label>2</label>
    </ligand>
</feature>
<feature type="binding site" evidence="24 38">
    <location>
        <begin position="301"/>
        <end position="302"/>
    </location>
    <ligand>
        <name>3',5'-cyclic AMP</name>
        <dbReference type="ChEBI" id="CHEBI:58165"/>
        <label>2</label>
    </ligand>
</feature>
<feature type="binding site" evidence="23 24 36 39">
    <location>
        <begin position="301"/>
        <end position="302"/>
    </location>
    <ligand>
        <name>3',5'-cyclic GMP</name>
        <dbReference type="ChEBI" id="CHEBI:57746"/>
        <label>2</label>
    </ligand>
</feature>
<feature type="binding site" evidence="24 38">
    <location>
        <position position="336"/>
    </location>
    <ligand>
        <name>3',5'-cyclic AMP</name>
        <dbReference type="ChEBI" id="CHEBI:58165"/>
        <label>2</label>
    </ligand>
</feature>
<feature type="binding site" evidence="23 24 36 39">
    <location>
        <position position="336"/>
    </location>
    <ligand>
        <name>3',5'-cyclic GMP</name>
        <dbReference type="ChEBI" id="CHEBI:57746"/>
        <label>2</label>
    </ligand>
</feature>
<feature type="binding site" evidence="4">
    <location>
        <begin position="366"/>
        <end position="374"/>
    </location>
    <ligand>
        <name>ATP</name>
        <dbReference type="ChEBI" id="CHEBI:30616"/>
    </ligand>
</feature>
<feature type="binding site" evidence="4">
    <location>
        <position position="390"/>
    </location>
    <ligand>
        <name>ATP</name>
        <dbReference type="ChEBI" id="CHEBI:30616"/>
    </ligand>
</feature>
<feature type="modified residue" description="N-acetylserine" evidence="40">
    <location>
        <position position="2"/>
    </location>
</feature>
<feature type="modified residue" description="Phosphothreonine; by autocatalysis" evidence="2">
    <location>
        <position position="59"/>
    </location>
</feature>
<feature type="modified residue" description="Phosphothreonine" evidence="3">
    <location>
        <position position="515"/>
    </location>
</feature>
<feature type="disulfide bond" description="Interchain" evidence="1">
    <location>
        <position position="43"/>
    </location>
</feature>
<feature type="splice variant" id="VSP_038714" description="In isoform Beta." evidence="28 29 30">
    <original>MSELEEDFAKILMLKEERIKELEKRLSEKEEEIQELKRKLHKCQSVLPVPSTHIGPRTTRAQGISAEPQTYRSFHDLRQAFRKFTKSER</original>
    <variation>MGTLRDLQYALQEKIEELRQRDALIDELELELDQKDELIQKLQNELDKYRSVIRPATQQAQKQSASTLQGEPRTKRQAISAEPTAFDIQDLSHVTLPFYPKSPQ</variation>
    <location>
        <begin position="1"/>
        <end position="89"/>
    </location>
</feature>
<feature type="splice variant" id="VSP_055541" description="In isoform 3." evidence="27">
    <original>MSELEEDFAKILMLK</original>
    <variation>MEKQNMFLHGSYILR</variation>
    <location>
        <begin position="1"/>
        <end position="15"/>
    </location>
</feature>
<feature type="splice variant" id="VSP_055542" description="In isoform 3." evidence="27">
    <location>
        <begin position="16"/>
        <end position="297"/>
    </location>
</feature>
<feature type="sequence variant" id="VAR_070434" description="In AAT8; impairs cGMP binding; the mutant protein is constitutively active; dbSNP:rs397515330." evidence="22">
    <original>R</original>
    <variation>Q</variation>
    <location>
        <position position="177"/>
    </location>
</feature>
<feature type="sequence variant" id="VAR_046773" description="In dbSNP:rs56082459." evidence="16">
    <original>I</original>
    <variation>V</variation>
    <location>
        <position position="249"/>
    </location>
</feature>
<feature type="sequence variant" id="VAR_051632" description="In dbSNP:rs34997494." evidence="16">
    <original>N</original>
    <variation>S</variation>
    <location>
        <position position="267"/>
    </location>
</feature>
<feature type="sequence variant" id="VAR_070435" description="In dbSNP:rs149710600." evidence="22">
    <original>Y</original>
    <variation>F</variation>
    <location>
        <position position="474"/>
    </location>
</feature>
<feature type="sequence variant" id="VAR_070436" description="In dbSNP:rs750949508." evidence="22">
    <original>G</original>
    <variation>A</variation>
    <location>
        <position position="666"/>
    </location>
</feature>
<feature type="mutagenesis site" description="Loss of binding to PPP1R12A." evidence="8">
    <original>L</original>
    <variation>A</variation>
    <location>
        <position position="12"/>
    </location>
</feature>
<feature type="mutagenesis site" description="Loss of binding to PPP1R12A." evidence="8">
    <original>I</original>
    <variation>A</variation>
    <location>
        <position position="19"/>
    </location>
</feature>
<feature type="mutagenesis site" description="Loss of binding to PPP1R12A." evidence="8">
    <original>L</original>
    <variation>P</variation>
    <location>
        <position position="26"/>
    </location>
</feature>
<feature type="mutagenesis site" description="Loss of binding to PPP1R12A." evidence="8">
    <original>I</original>
    <variation>A</variation>
    <location>
        <position position="33"/>
    </location>
</feature>
<feature type="mutagenesis site" description="Loss of binding to PPP1R12A." evidence="8">
    <original>L</original>
    <variation>A</variation>
    <location>
        <position position="40"/>
    </location>
</feature>
<feature type="mutagenesis site" description="Reduces cGMP binding affinity." evidence="23">
    <original>L</original>
    <variation>A</variation>
    <location>
        <position position="281"/>
    </location>
</feature>
<feature type="mutagenesis site" description="Reduces cGMP binding affinity." evidence="23">
    <original>R</original>
    <variation>A</variation>
    <location>
        <position position="282"/>
    </location>
</feature>
<feature type="mutagenesis site" description="Reduces cGMP binding affinity." evidence="23">
    <original>T</original>
    <variation>A</variation>
    <location>
        <position position="302"/>
    </location>
</feature>
<feature type="mutagenesis site" description="Reduces cGMP binding affinity." evidence="23">
    <original>Y</original>
    <variation>A</variation>
    <location>
        <position position="336"/>
    </location>
</feature>
<feature type="helix" evidence="43">
    <location>
        <begin position="3"/>
        <end position="44"/>
    </location>
</feature>
<feature type="helix" evidence="46">
    <location>
        <begin position="74"/>
        <end position="76"/>
    </location>
</feature>
<feature type="turn" evidence="46">
    <location>
        <begin position="77"/>
        <end position="79"/>
    </location>
</feature>
<feature type="helix" evidence="47">
    <location>
        <begin position="88"/>
        <end position="99"/>
    </location>
</feature>
<feature type="turn" evidence="47">
    <location>
        <begin position="102"/>
        <end position="106"/>
    </location>
</feature>
<feature type="helix" evidence="47">
    <location>
        <begin position="109"/>
        <end position="118"/>
    </location>
</feature>
<feature type="strand" evidence="47">
    <location>
        <begin position="120"/>
        <end position="124"/>
    </location>
</feature>
<feature type="strand" evidence="47">
    <location>
        <begin position="129"/>
        <end position="131"/>
    </location>
</feature>
<feature type="strand" evidence="46">
    <location>
        <begin position="135"/>
        <end position="137"/>
    </location>
</feature>
<feature type="strand" evidence="47">
    <location>
        <begin position="139"/>
        <end position="146"/>
    </location>
</feature>
<feature type="strand" evidence="47">
    <location>
        <begin position="148"/>
        <end position="152"/>
    </location>
</feature>
<feature type="strand" evidence="47">
    <location>
        <begin position="155"/>
        <end position="160"/>
    </location>
</feature>
<feature type="strand" evidence="47">
    <location>
        <begin position="165"/>
        <end position="167"/>
    </location>
</feature>
<feature type="helix" evidence="47">
    <location>
        <begin position="168"/>
        <end position="172"/>
    </location>
</feature>
<feature type="strand" evidence="41">
    <location>
        <begin position="174"/>
        <end position="176"/>
    </location>
</feature>
<feature type="strand" evidence="47">
    <location>
        <begin position="178"/>
        <end position="185"/>
    </location>
</feature>
<feature type="strand" evidence="47">
    <location>
        <begin position="187"/>
        <end position="193"/>
    </location>
</feature>
<feature type="helix" evidence="47">
    <location>
        <begin position="194"/>
        <end position="201"/>
    </location>
</feature>
<feature type="helix" evidence="44">
    <location>
        <begin position="209"/>
        <end position="217"/>
    </location>
</feature>
<feature type="helix" evidence="44">
    <location>
        <begin position="220"/>
        <end position="222"/>
    </location>
</feature>
<feature type="helix" evidence="44">
    <location>
        <begin position="227"/>
        <end position="236"/>
    </location>
</feature>
<feature type="strand" evidence="44">
    <location>
        <begin position="238"/>
        <end position="242"/>
    </location>
</feature>
<feature type="strand" evidence="44">
    <location>
        <begin position="247"/>
        <end position="249"/>
    </location>
</feature>
<feature type="strand" evidence="44">
    <location>
        <begin position="257"/>
        <end position="264"/>
    </location>
</feature>
<feature type="strand" evidence="44">
    <location>
        <begin position="266"/>
        <end position="270"/>
    </location>
</feature>
<feature type="strand" evidence="42">
    <location>
        <begin position="274"/>
        <end position="276"/>
    </location>
</feature>
<feature type="strand" evidence="44">
    <location>
        <begin position="279"/>
        <end position="284"/>
    </location>
</feature>
<feature type="helix" evidence="44">
    <location>
        <begin position="292"/>
        <end position="296"/>
    </location>
</feature>
<feature type="strand" evidence="48">
    <location>
        <begin position="297"/>
        <end position="300"/>
    </location>
</feature>
<feature type="strand" evidence="44">
    <location>
        <begin position="303"/>
        <end position="317"/>
    </location>
</feature>
<feature type="helix" evidence="44">
    <location>
        <begin position="318"/>
        <end position="325"/>
    </location>
</feature>
<feature type="turn" evidence="44">
    <location>
        <begin position="326"/>
        <end position="329"/>
    </location>
</feature>
<feature type="helix" evidence="49">
    <location>
        <begin position="331"/>
        <end position="335"/>
    </location>
</feature>
<feature type="helix" evidence="45">
    <location>
        <begin position="339"/>
        <end position="353"/>
    </location>
</feature>
<feature type="helix" evidence="45">
    <location>
        <begin position="357"/>
        <end position="359"/>
    </location>
</feature>
<feature type="strand" evidence="45">
    <location>
        <begin position="360"/>
        <end position="368"/>
    </location>
</feature>
<feature type="strand" evidence="45">
    <location>
        <begin position="373"/>
        <end position="379"/>
    </location>
</feature>
<feature type="strand" evidence="45">
    <location>
        <begin position="386"/>
        <end position="393"/>
    </location>
</feature>
<feature type="helix" evidence="45">
    <location>
        <begin position="394"/>
        <end position="399"/>
    </location>
</feature>
<feature type="helix" evidence="45">
    <location>
        <begin position="403"/>
        <end position="415"/>
    </location>
</feature>
<feature type="strand" evidence="45">
    <location>
        <begin position="424"/>
        <end position="429"/>
    </location>
</feature>
<feature type="strand" evidence="45">
    <location>
        <begin position="431"/>
        <end position="439"/>
    </location>
</feature>
<feature type="helix" evidence="45">
    <location>
        <begin position="446"/>
        <end position="453"/>
    </location>
</feature>
<feature type="helix" evidence="45">
    <location>
        <begin position="458"/>
        <end position="477"/>
    </location>
</feature>
<feature type="helix" evidence="45">
    <location>
        <begin position="487"/>
        <end position="489"/>
    </location>
</feature>
<feature type="strand" evidence="45">
    <location>
        <begin position="490"/>
        <end position="492"/>
    </location>
</feature>
<feature type="strand" evidence="45">
    <location>
        <begin position="498"/>
        <end position="500"/>
    </location>
</feature>
<feature type="helix" evidence="45">
    <location>
        <begin position="522"/>
        <end position="524"/>
    </location>
</feature>
<feature type="helix" evidence="45">
    <location>
        <begin position="527"/>
        <end position="530"/>
    </location>
</feature>
<feature type="helix" evidence="45">
    <location>
        <begin position="538"/>
        <end position="553"/>
    </location>
</feature>
<feature type="helix" evidence="45">
    <location>
        <begin position="563"/>
        <end position="572"/>
    </location>
</feature>
<feature type="helix" evidence="45">
    <location>
        <begin position="574"/>
        <end position="576"/>
    </location>
</feature>
<feature type="helix" evidence="45">
    <location>
        <begin position="585"/>
        <end position="594"/>
    </location>
</feature>
<feature type="helix" evidence="45">
    <location>
        <begin position="599"/>
        <end position="601"/>
    </location>
</feature>
<feature type="turn" evidence="45">
    <location>
        <begin position="607"/>
        <end position="609"/>
    </location>
</feature>
<feature type="helix" evidence="45">
    <location>
        <begin position="610"/>
        <end position="614"/>
    </location>
</feature>
<feature type="helix" evidence="45">
    <location>
        <begin position="617"/>
        <end position="619"/>
    </location>
</feature>
<feature type="helix" evidence="45">
    <location>
        <begin position="624"/>
        <end position="628"/>
    </location>
</feature>
<feature type="turn" evidence="45">
    <location>
        <begin position="667"/>
        <end position="670"/>
    </location>
</feature>
<protein>
    <recommendedName>
        <fullName>cGMP-dependent protein kinase 1</fullName>
        <shortName>cGK 1</shortName>
        <shortName>cGK1</shortName>
        <ecNumber>2.7.11.12</ecNumber>
    </recommendedName>
    <alternativeName>
        <fullName>cGMP-dependent protein kinase I</fullName>
        <shortName>cGKI</shortName>
    </alternativeName>
</protein>
<keyword id="KW-0002">3D-structure</keyword>
<keyword id="KW-0007">Acetylation</keyword>
<keyword id="KW-0021">Allosteric enzyme</keyword>
<keyword id="KW-0025">Alternative splicing</keyword>
<keyword id="KW-0993">Aortic aneurysm</keyword>
<keyword id="KW-0067">ATP-binding</keyword>
<keyword id="KW-0140">cGMP</keyword>
<keyword id="KW-0142">cGMP-binding</keyword>
<keyword id="KW-0175">Coiled coil</keyword>
<keyword id="KW-0963">Cytoplasm</keyword>
<keyword id="KW-0225">Disease variant</keyword>
<keyword id="KW-1015">Disulfide bond</keyword>
<keyword id="KW-0418">Kinase</keyword>
<keyword id="KW-0547">Nucleotide-binding</keyword>
<keyword id="KW-0597">Phosphoprotein</keyword>
<keyword id="KW-1267">Proteomics identification</keyword>
<keyword id="KW-1185">Reference proteome</keyword>
<keyword id="KW-0723">Serine/threonine-protein kinase</keyword>
<keyword id="KW-0808">Transferase</keyword>
<organism>
    <name type="scientific">Homo sapiens</name>
    <name type="common">Human</name>
    <dbReference type="NCBI Taxonomy" id="9606"/>
    <lineage>
        <taxon>Eukaryota</taxon>
        <taxon>Metazoa</taxon>
        <taxon>Chordata</taxon>
        <taxon>Craniata</taxon>
        <taxon>Vertebrata</taxon>
        <taxon>Euteleostomi</taxon>
        <taxon>Mammalia</taxon>
        <taxon>Eutheria</taxon>
        <taxon>Euarchontoglires</taxon>
        <taxon>Primates</taxon>
        <taxon>Haplorrhini</taxon>
        <taxon>Catarrhini</taxon>
        <taxon>Hominidae</taxon>
        <taxon>Homo</taxon>
    </lineage>
</organism>
<gene>
    <name type="primary">PRKG1</name>
    <name type="synonym">PRKG1B</name>
    <name type="synonym">PRKGR1A</name>
    <name type="synonym">PRKGR1B</name>
</gene>
<name>KGP1_HUMAN</name>
<reference key="1">
    <citation type="journal article" date="1989" name="FEBS Lett.">
        <title>Molecular cloning and predicted full-length amino acid sequence of the type I beta isozyme of cGMP-dependent protein kinase from human placenta. Tissue distribution and developmental changes in rat.</title>
        <authorList>
            <person name="Sandberg M."/>
            <person name="Natarajan V."/>
            <person name="Ronander I."/>
            <person name="Kalderon D."/>
            <person name="Walter U."/>
            <person name="Lohmann S.M."/>
            <person name="Jahnsen T."/>
        </authorList>
    </citation>
    <scope>NUCLEOTIDE SEQUENCE [MRNA] (ISOFORM BETA)</scope>
    <source>
        <tissue>Placenta</tissue>
    </source>
</reference>
<reference key="2">
    <citation type="submission" date="1989-10" db="EMBL/GenBank/DDBJ databases">
        <authorList>
            <person name="Sandberg M."/>
        </authorList>
    </citation>
    <scope>SEQUENCE REVISION</scope>
</reference>
<reference key="3">
    <citation type="journal article" date="1996" name="Hypertension">
        <title>cDNA cloning and gene expression of human type Ialpha cGMP-dependent protein kinase.</title>
        <authorList>
            <person name="Tamura N."/>
            <person name="Itoh H."/>
            <person name="Ogawa Y."/>
            <person name="Nakagawa O."/>
            <person name="Harada M."/>
            <person name="Chun T."/>
            <person name="Suga S."/>
            <person name="Yoshimasa T."/>
            <person name="Nakao K."/>
        </authorList>
    </citation>
    <scope>NUCLEOTIDE SEQUENCE [MRNA] (ISOFORM ALPHA)</scope>
    <source>
        <tissue>Lung</tissue>
    </source>
</reference>
<reference key="4">
    <citation type="journal article" date="1997" name="Genomics">
        <title>Characterization of the human gene encoding the type I alpha and type I beta cGMP-dependent protein kinase (PRKG1).</title>
        <authorList>
            <person name="Orstavik S."/>
            <person name="Natarajan V."/>
            <person name="Tasken K."/>
            <person name="Jahnsen T."/>
            <person name="Sandberg M."/>
        </authorList>
    </citation>
    <scope>NUCLEOTIDE SEQUENCE [GENOMIC DNA]</scope>
    <scope>TISSUE SPECIFICITY</scope>
</reference>
<reference key="5">
    <citation type="journal article" date="2004" name="Nat. Genet.">
        <title>Complete sequencing and characterization of 21,243 full-length human cDNAs.</title>
        <authorList>
            <person name="Ota T."/>
            <person name="Suzuki Y."/>
            <person name="Nishikawa T."/>
            <person name="Otsuki T."/>
            <person name="Sugiyama T."/>
            <person name="Irie R."/>
            <person name="Wakamatsu A."/>
            <person name="Hayashi K."/>
            <person name="Sato H."/>
            <person name="Nagai K."/>
            <person name="Kimura K."/>
            <person name="Makita H."/>
            <person name="Sekine M."/>
            <person name="Obayashi M."/>
            <person name="Nishi T."/>
            <person name="Shibahara T."/>
            <person name="Tanaka T."/>
            <person name="Ishii S."/>
            <person name="Yamamoto J."/>
            <person name="Saito K."/>
            <person name="Kawai Y."/>
            <person name="Isono Y."/>
            <person name="Nakamura Y."/>
            <person name="Nagahari K."/>
            <person name="Murakami K."/>
            <person name="Yasuda T."/>
            <person name="Iwayanagi T."/>
            <person name="Wagatsuma M."/>
            <person name="Shiratori A."/>
            <person name="Sudo H."/>
            <person name="Hosoiri T."/>
            <person name="Kaku Y."/>
            <person name="Kodaira H."/>
            <person name="Kondo H."/>
            <person name="Sugawara M."/>
            <person name="Takahashi M."/>
            <person name="Kanda K."/>
            <person name="Yokoi T."/>
            <person name="Furuya T."/>
            <person name="Kikkawa E."/>
            <person name="Omura Y."/>
            <person name="Abe K."/>
            <person name="Kamihara K."/>
            <person name="Katsuta N."/>
            <person name="Sato K."/>
            <person name="Tanikawa M."/>
            <person name="Yamazaki M."/>
            <person name="Ninomiya K."/>
            <person name="Ishibashi T."/>
            <person name="Yamashita H."/>
            <person name="Murakawa K."/>
            <person name="Fujimori K."/>
            <person name="Tanai H."/>
            <person name="Kimata M."/>
            <person name="Watanabe M."/>
            <person name="Hiraoka S."/>
            <person name="Chiba Y."/>
            <person name="Ishida S."/>
            <person name="Ono Y."/>
            <person name="Takiguchi S."/>
            <person name="Watanabe S."/>
            <person name="Yosida M."/>
            <person name="Hotuta T."/>
            <person name="Kusano J."/>
            <person name="Kanehori K."/>
            <person name="Takahashi-Fujii A."/>
            <person name="Hara H."/>
            <person name="Tanase T.-O."/>
            <person name="Nomura Y."/>
            <person name="Togiya S."/>
            <person name="Komai F."/>
            <person name="Hara R."/>
            <person name="Takeuchi K."/>
            <person name="Arita M."/>
            <person name="Imose N."/>
            <person name="Musashino K."/>
            <person name="Yuuki H."/>
            <person name="Oshima A."/>
            <person name="Sasaki N."/>
            <person name="Aotsuka S."/>
            <person name="Yoshikawa Y."/>
            <person name="Matsunawa H."/>
            <person name="Ichihara T."/>
            <person name="Shiohata N."/>
            <person name="Sano S."/>
            <person name="Moriya S."/>
            <person name="Momiyama H."/>
            <person name="Satoh N."/>
            <person name="Takami S."/>
            <person name="Terashima Y."/>
            <person name="Suzuki O."/>
            <person name="Nakagawa S."/>
            <person name="Senoh A."/>
            <person name="Mizoguchi H."/>
            <person name="Goto Y."/>
            <person name="Shimizu F."/>
            <person name="Wakebe H."/>
            <person name="Hishigaki H."/>
            <person name="Watanabe T."/>
            <person name="Sugiyama A."/>
            <person name="Takemoto M."/>
            <person name="Kawakami B."/>
            <person name="Yamazaki M."/>
            <person name="Watanabe K."/>
            <person name="Kumagai A."/>
            <person name="Itakura S."/>
            <person name="Fukuzumi Y."/>
            <person name="Fujimori Y."/>
            <person name="Komiyama M."/>
            <person name="Tashiro H."/>
            <person name="Tanigami A."/>
            <person name="Fujiwara T."/>
            <person name="Ono T."/>
            <person name="Yamada K."/>
            <person name="Fujii Y."/>
            <person name="Ozaki K."/>
            <person name="Hirao M."/>
            <person name="Ohmori Y."/>
            <person name="Kawabata A."/>
            <person name="Hikiji T."/>
            <person name="Kobatake N."/>
            <person name="Inagaki H."/>
            <person name="Ikema Y."/>
            <person name="Okamoto S."/>
            <person name="Okitani R."/>
            <person name="Kawakami T."/>
            <person name="Noguchi S."/>
            <person name="Itoh T."/>
            <person name="Shigeta K."/>
            <person name="Senba T."/>
            <person name="Matsumura K."/>
            <person name="Nakajima Y."/>
            <person name="Mizuno T."/>
            <person name="Morinaga M."/>
            <person name="Sasaki M."/>
            <person name="Togashi T."/>
            <person name="Oyama M."/>
            <person name="Hata H."/>
            <person name="Watanabe M."/>
            <person name="Komatsu T."/>
            <person name="Mizushima-Sugano J."/>
            <person name="Satoh T."/>
            <person name="Shirai Y."/>
            <person name="Takahashi Y."/>
            <person name="Nakagawa K."/>
            <person name="Okumura K."/>
            <person name="Nagase T."/>
            <person name="Nomura N."/>
            <person name="Kikuchi H."/>
            <person name="Masuho Y."/>
            <person name="Yamashita R."/>
            <person name="Nakai K."/>
            <person name="Yada T."/>
            <person name="Nakamura Y."/>
            <person name="Ohara O."/>
            <person name="Isogai T."/>
            <person name="Sugano S."/>
        </authorList>
    </citation>
    <scope>NUCLEOTIDE SEQUENCE [LARGE SCALE MRNA] (ISOFORM 3)</scope>
    <source>
        <tissue>Testis</tissue>
    </source>
</reference>
<reference key="6">
    <citation type="journal article" date="2007" name="BMC Genomics">
        <title>The full-ORF clone resource of the German cDNA consortium.</title>
        <authorList>
            <person name="Bechtel S."/>
            <person name="Rosenfelder H."/>
            <person name="Duda A."/>
            <person name="Schmidt C.P."/>
            <person name="Ernst U."/>
            <person name="Wellenreuther R."/>
            <person name="Mehrle A."/>
            <person name="Schuster C."/>
            <person name="Bahr A."/>
            <person name="Bloecker H."/>
            <person name="Heubner D."/>
            <person name="Hoerlein A."/>
            <person name="Michel G."/>
            <person name="Wedler H."/>
            <person name="Koehrer K."/>
            <person name="Ottenwaelder B."/>
            <person name="Poustka A."/>
            <person name="Wiemann S."/>
            <person name="Schupp I."/>
        </authorList>
    </citation>
    <scope>NUCLEOTIDE SEQUENCE [LARGE SCALE MRNA] (ISOFORM BETA)</scope>
    <source>
        <tissue>Cervix</tissue>
    </source>
</reference>
<reference key="7">
    <citation type="journal article" date="2004" name="Nature">
        <title>The DNA sequence and comparative analysis of human chromosome 10.</title>
        <authorList>
            <person name="Deloukas P."/>
            <person name="Earthrowl M.E."/>
            <person name="Grafham D.V."/>
            <person name="Rubenfield M."/>
            <person name="French L."/>
            <person name="Steward C.A."/>
            <person name="Sims S.K."/>
            <person name="Jones M.C."/>
            <person name="Searle S."/>
            <person name="Scott C."/>
            <person name="Howe K."/>
            <person name="Hunt S.E."/>
            <person name="Andrews T.D."/>
            <person name="Gilbert J.G.R."/>
            <person name="Swarbreck D."/>
            <person name="Ashurst J.L."/>
            <person name="Taylor A."/>
            <person name="Battles J."/>
            <person name="Bird C.P."/>
            <person name="Ainscough R."/>
            <person name="Almeida J.P."/>
            <person name="Ashwell R.I.S."/>
            <person name="Ambrose K.D."/>
            <person name="Babbage A.K."/>
            <person name="Bagguley C.L."/>
            <person name="Bailey J."/>
            <person name="Banerjee R."/>
            <person name="Bates K."/>
            <person name="Beasley H."/>
            <person name="Bray-Allen S."/>
            <person name="Brown A.J."/>
            <person name="Brown J.Y."/>
            <person name="Burford D.C."/>
            <person name="Burrill W."/>
            <person name="Burton J."/>
            <person name="Cahill P."/>
            <person name="Camire D."/>
            <person name="Carter N.P."/>
            <person name="Chapman J.C."/>
            <person name="Clark S.Y."/>
            <person name="Clarke G."/>
            <person name="Clee C.M."/>
            <person name="Clegg S."/>
            <person name="Corby N."/>
            <person name="Coulson A."/>
            <person name="Dhami P."/>
            <person name="Dutta I."/>
            <person name="Dunn M."/>
            <person name="Faulkner L."/>
            <person name="Frankish A."/>
            <person name="Frankland J.A."/>
            <person name="Garner P."/>
            <person name="Garnett J."/>
            <person name="Gribble S."/>
            <person name="Griffiths C."/>
            <person name="Grocock R."/>
            <person name="Gustafson E."/>
            <person name="Hammond S."/>
            <person name="Harley J.L."/>
            <person name="Hart E."/>
            <person name="Heath P.D."/>
            <person name="Ho T.P."/>
            <person name="Hopkins B."/>
            <person name="Horne J."/>
            <person name="Howden P.J."/>
            <person name="Huckle E."/>
            <person name="Hynds C."/>
            <person name="Johnson C."/>
            <person name="Johnson D."/>
            <person name="Kana A."/>
            <person name="Kay M."/>
            <person name="Kimberley A.M."/>
            <person name="Kershaw J.K."/>
            <person name="Kokkinaki M."/>
            <person name="Laird G.K."/>
            <person name="Lawlor S."/>
            <person name="Lee H.M."/>
            <person name="Leongamornlert D.A."/>
            <person name="Laird G."/>
            <person name="Lloyd C."/>
            <person name="Lloyd D.M."/>
            <person name="Loveland J."/>
            <person name="Lovell J."/>
            <person name="McLaren S."/>
            <person name="McLay K.E."/>
            <person name="McMurray A."/>
            <person name="Mashreghi-Mohammadi M."/>
            <person name="Matthews L."/>
            <person name="Milne S."/>
            <person name="Nickerson T."/>
            <person name="Nguyen M."/>
            <person name="Overton-Larty E."/>
            <person name="Palmer S.A."/>
            <person name="Pearce A.V."/>
            <person name="Peck A.I."/>
            <person name="Pelan S."/>
            <person name="Phillimore B."/>
            <person name="Porter K."/>
            <person name="Rice C.M."/>
            <person name="Rogosin A."/>
            <person name="Ross M.T."/>
            <person name="Sarafidou T."/>
            <person name="Sehra H.K."/>
            <person name="Shownkeen R."/>
            <person name="Skuce C.D."/>
            <person name="Smith M."/>
            <person name="Standring L."/>
            <person name="Sycamore N."/>
            <person name="Tester J."/>
            <person name="Thorpe A."/>
            <person name="Torcasso W."/>
            <person name="Tracey A."/>
            <person name="Tromans A."/>
            <person name="Tsolas J."/>
            <person name="Wall M."/>
            <person name="Walsh J."/>
            <person name="Wang H."/>
            <person name="Weinstock K."/>
            <person name="West A.P."/>
            <person name="Willey D.L."/>
            <person name="Whitehead S.L."/>
            <person name="Wilming L."/>
            <person name="Wray P.W."/>
            <person name="Young L."/>
            <person name="Chen Y."/>
            <person name="Lovering R.C."/>
            <person name="Moschonas N.K."/>
            <person name="Siebert R."/>
            <person name="Fechtel K."/>
            <person name="Bentley D."/>
            <person name="Durbin R.M."/>
            <person name="Hubbard T."/>
            <person name="Doucette-Stamm L."/>
            <person name="Beck S."/>
            <person name="Smith D.R."/>
            <person name="Rogers J."/>
        </authorList>
    </citation>
    <scope>NUCLEOTIDE SEQUENCE [LARGE SCALE GENOMIC DNA]</scope>
</reference>
<reference key="8">
    <citation type="submission" date="2005-07" db="EMBL/GenBank/DDBJ databases">
        <authorList>
            <person name="Mural R.J."/>
            <person name="Istrail S."/>
            <person name="Sutton G.G."/>
            <person name="Florea L."/>
            <person name="Halpern A.L."/>
            <person name="Mobarry C.M."/>
            <person name="Lippert R."/>
            <person name="Walenz B."/>
            <person name="Shatkay H."/>
            <person name="Dew I."/>
            <person name="Miller J.R."/>
            <person name="Flanigan M.J."/>
            <person name="Edwards N.J."/>
            <person name="Bolanos R."/>
            <person name="Fasulo D."/>
            <person name="Halldorsson B.V."/>
            <person name="Hannenhalli S."/>
            <person name="Turner R."/>
            <person name="Yooseph S."/>
            <person name="Lu F."/>
            <person name="Nusskern D.R."/>
            <person name="Shue B.C."/>
            <person name="Zheng X.H."/>
            <person name="Zhong F."/>
            <person name="Delcher A.L."/>
            <person name="Huson D.H."/>
            <person name="Kravitz S.A."/>
            <person name="Mouchard L."/>
            <person name="Reinert K."/>
            <person name="Remington K.A."/>
            <person name="Clark A.G."/>
            <person name="Waterman M.S."/>
            <person name="Eichler E.E."/>
            <person name="Adams M.D."/>
            <person name="Hunkapiller M.W."/>
            <person name="Myers E.W."/>
            <person name="Venter J.C."/>
        </authorList>
    </citation>
    <scope>NUCLEOTIDE SEQUENCE [LARGE SCALE GENOMIC DNA]</scope>
</reference>
<reference key="9">
    <citation type="journal article" date="2004" name="Genome Res.">
        <title>The status, quality, and expansion of the NIH full-length cDNA project: the Mammalian Gene Collection (MGC).</title>
        <authorList>
            <consortium name="The MGC Project Team"/>
        </authorList>
    </citation>
    <scope>NUCLEOTIDE SEQUENCE [LARGE SCALE MRNA] (ISOFORM BETA)</scope>
</reference>
<reference key="10">
    <citation type="journal article" date="1994" name="J. Biol. Chem.">
        <title>cAMP- and cGMP-dependent protein kinase phosphorylation sites of the focal adhesion vasodilator-stimulated phosphoprotein (VASP) in vitro and in intact human platelets.</title>
        <authorList>
            <person name="Butt E."/>
            <person name="Abel K."/>
            <person name="Krieger M."/>
            <person name="Palm D."/>
            <person name="Hoppe V."/>
            <person name="Hoppe J."/>
            <person name="Walter U."/>
        </authorList>
    </citation>
    <scope>FUNCTION IN PHOSPHORYLATION OF VASP</scope>
</reference>
<reference key="11">
    <citation type="journal article" date="1999" name="Science">
        <title>Regulation of myosin phosphatase by a specific interaction with cGMP-dependent protein kinase Ialpha.</title>
        <authorList>
            <person name="Surks H.K."/>
            <person name="Mochizuki N."/>
            <person name="Kasai Y."/>
            <person name="Georgescu S.P."/>
            <person name="Tang K.M."/>
            <person name="Ito M."/>
            <person name="Lincoln T.M."/>
            <person name="Mendelsohn M.E."/>
        </authorList>
    </citation>
    <scope>INTERACTION WITH PPP1R12A</scope>
    <scope>SUBUNIT</scope>
    <scope>MUTAGENESIS OF LEU-12; ILE-19; LEU-26; ILE-33 AND LEU-40</scope>
    <scope>FUNCTION</scope>
</reference>
<reference key="12">
    <citation type="journal article" date="2001" name="Biochem. Biophys. Res. Commun.">
        <title>cGMP-dependent protein kinase phosphorylates and inactivates RhoA.</title>
        <authorList>
            <person name="Sawada N."/>
            <person name="Itoh H."/>
            <person name="Yamashita J."/>
            <person name="Doi K."/>
            <person name="Inoue M."/>
            <person name="Masatsugu K."/>
            <person name="Fukunaga Y."/>
            <person name="Sakaguchi S."/>
            <person name="Sone M."/>
            <person name="Yamahara K."/>
            <person name="Yurugi T."/>
            <person name="Nakao K."/>
        </authorList>
    </citation>
    <scope>FUNCTION IN PHOSPHORYLATION OF RHOA</scope>
</reference>
<reference key="13">
    <citation type="journal article" date="2002" name="J. Biol. Chem.">
        <title>cGMP-dependent protein kinase I beta physically and functionally interacts with the transcriptional regulator TFII-I.</title>
        <authorList>
            <person name="Casteel D.E."/>
            <person name="Zhuang S."/>
            <person name="Gudi T."/>
            <person name="Tang J."/>
            <person name="Vuica M."/>
            <person name="Desiderio S."/>
            <person name="Pilz R.B."/>
        </authorList>
    </citation>
    <scope>FUNCTION IN PHOSPHORYLATION OF GTF2I</scope>
    <scope>INTERACTION WITH GTF2I</scope>
</reference>
<reference key="14">
    <citation type="journal article" date="2002" name="J. Biol. Chem.">
        <title>Regulation of cGMP-specific phosphodiesterase (PDE5) phosphorylation in smooth muscle cells.</title>
        <authorList>
            <person name="Rybalkin S.D."/>
            <person name="Rybalkina I.G."/>
            <person name="Feil R."/>
            <person name="Hofmann F."/>
            <person name="Beavo J.A."/>
        </authorList>
    </citation>
    <scope>FUNCTION IN PHOSPHORYLATION OF PDE5</scope>
</reference>
<reference key="15">
    <citation type="journal article" date="2003" name="Nat. Med.">
        <title>Regulator of G-protein signaling-2 mediates vascular smooth muscle relaxation and blood pressure.</title>
        <authorList>
            <person name="Tang K.M."/>
            <person name="Wang G.R."/>
            <person name="Lu P."/>
            <person name="Karas R.H."/>
            <person name="Aronovitz M."/>
            <person name="Heximer S.P."/>
            <person name="Kaltenbronn K.M."/>
            <person name="Blumer K.J."/>
            <person name="Siderovski D.P."/>
            <person name="Zhu Y."/>
            <person name="Mendelsohn M.E."/>
        </authorList>
    </citation>
    <scope>FUNCTION IN PHOSPHORYLATION OF RGS2</scope>
    <scope>INTERACTION WITH RGS2</scope>
</reference>
<reference key="16">
    <citation type="journal article" date="2004" name="J. Biol. Chem.">
        <title>Smooth muscle phosphatase is regulated in vivo by exclusion of phosphorylation of threonine 696 of MYPT1 by phosphorylation of Serine 695 in response to cyclic nucleotides.</title>
        <authorList>
            <person name="Wooldridge A.A."/>
            <person name="MacDonald J.A."/>
            <person name="Erdodi F."/>
            <person name="Ma C."/>
            <person name="Borman M.A."/>
            <person name="Hartshorne D.J."/>
            <person name="Haystead T.A.J."/>
        </authorList>
    </citation>
    <scope>FUNCTION</scope>
</reference>
<reference key="17">
    <citation type="journal article" date="2007" name="Blood">
        <title>IRAG mediates NO/cGMP-dependent inhibition of platelet aggregation and thrombus formation.</title>
        <authorList>
            <person name="Antl M."/>
            <person name="von Bruehl M.-L."/>
            <person name="Eiglsperger C."/>
            <person name="Werner M."/>
            <person name="Konrad I."/>
            <person name="Kocher T."/>
            <person name="Wilm M."/>
            <person name="Hofmann F."/>
            <person name="Massberg S."/>
            <person name="Schlossmann J."/>
        </authorList>
    </citation>
    <scope>FUNCTION IN THE INHIBITION OF PLATELET AGGREGATION</scope>
    <scope>FUNCTION IN PHOSPHORYLATION OF IRAG1</scope>
    <scope>SUBCELLULAR LOCATION</scope>
    <scope>INTERACTION WITH IRAG1 AND ITPR1</scope>
</reference>
<reference key="18">
    <citation type="journal article" date="2007" name="J. Mol. Biol.">
        <title>Interactions between the leucine-zipper motif of cGMP-dependent protein kinase and the C-terminal region of the targeting subunit of myosin light chain phosphatase.</title>
        <authorList>
            <person name="Lee E."/>
            <person name="Hayes D.B."/>
            <person name="Langsetmo K."/>
            <person name="Sundberg E.J."/>
            <person name="Tao T.C."/>
        </authorList>
    </citation>
    <scope>INTERACTION WITH PPP1R12A</scope>
</reference>
<reference key="19">
    <citation type="journal article" date="2008" name="J. Biol. Chem.">
        <title>Probing the interaction between the coiled coil leucine zipper of cGMP-dependent protein kinase Ialpha and the C terminus of the myosin binding subunit of the myosin light chain phosphatase.</title>
        <authorList>
            <person name="Sharma A.K."/>
            <person name="Zhou G.-P."/>
            <person name="Kupferman J."/>
            <person name="Surks H.K."/>
            <person name="Christensen E.N."/>
            <person name="Chou J.J."/>
            <person name="Mendelsohn M.E."/>
            <person name="Rigby A.C."/>
        </authorList>
    </citation>
    <scope>INTERACTION WITH PPP1R12A</scope>
    <scope>SUBUNIT</scope>
</reference>
<reference key="20">
    <citation type="journal article" date="2009" name="Mol. Cell. Proteomics">
        <title>Large-scale proteomics analysis of the human kinome.</title>
        <authorList>
            <person name="Oppermann F.S."/>
            <person name="Gnad F."/>
            <person name="Olsen J.V."/>
            <person name="Hornberger R."/>
            <person name="Greff Z."/>
            <person name="Keri G."/>
            <person name="Mann M."/>
            <person name="Daub H."/>
        </authorList>
    </citation>
    <scope>IDENTIFICATION BY MASS SPECTROMETRY [LARGE SCALE ANALYSIS]</scope>
</reference>
<reference key="21">
    <citation type="journal article" date="2010" name="Pharmacol. Rev.">
        <title>cGMP-dependent protein kinases and cGMP phosphodiesterases in nitric oxide and cGMP action.</title>
        <authorList>
            <person name="Francis S.H."/>
            <person name="Busch J.L."/>
            <person name="Corbin J.D."/>
            <person name="Sibley D."/>
        </authorList>
    </citation>
    <scope>REVIEW</scope>
</reference>
<reference key="22">
    <citation type="journal article" date="2011" name="BMC Syst. Biol.">
        <title>Initial characterization of the human central proteome.</title>
        <authorList>
            <person name="Burkard T.R."/>
            <person name="Planyavsky M."/>
            <person name="Kaupe I."/>
            <person name="Breitwieser F.P."/>
            <person name="Buerckstuemmer T."/>
            <person name="Bennett K.L."/>
            <person name="Superti-Furga G."/>
            <person name="Colinge J."/>
        </authorList>
    </citation>
    <scope>IDENTIFICATION BY MASS SPECTROMETRY [LARGE SCALE ANALYSIS]</scope>
</reference>
<reference key="23">
    <citation type="journal article" date="2011" name="Cell. Signal.">
        <title>Functional regulation of transient receptor potential canonical 7 by cGMP-dependent protein kinase Ialpha.</title>
        <authorList>
            <person name="Yuasa K."/>
            <person name="Matsuda T."/>
            <person name="Tsuji A."/>
        </authorList>
    </citation>
    <scope>FUNCTION (ISOFORM ALPHA) IN PHOSPHORYLATION OF TRPC7</scope>
    <scope>INTERACTION WITH TRPC7</scope>
    <scope>SUBCELLULAR LOCATION</scope>
</reference>
<reference key="24">
    <citation type="journal article" date="2012" name="Mol. Cell. Proteomics">
        <title>Comparative large-scale characterisation of plant vs. mammal proteins reveals similar and idiosyncratic N-alpha acetylation features.</title>
        <authorList>
            <person name="Bienvenut W.V."/>
            <person name="Sumpton D."/>
            <person name="Martinez A."/>
            <person name="Lilla S."/>
            <person name="Espagne C."/>
            <person name="Meinnel T."/>
            <person name="Giglione C."/>
        </authorList>
    </citation>
    <scope>ACETYLATION [LARGE SCALE ANALYSIS] AT SER-2</scope>
    <scope>CLEAVAGE OF INITIATOR METHIONINE [LARGE SCALE ANALYSIS]</scope>
    <scope>IDENTIFICATION BY MASS SPECTROMETRY [LARGE SCALE ANALYSIS]</scope>
</reference>
<reference key="25">
    <citation type="journal article" date="2005" name="Protein Sci.">
        <title>Rapid and accurate structure determination of coiled-coil domains using NMR dipolar couplings: application to cGMP-dependent protein kinase Ialpha.</title>
        <authorList>
            <person name="Schnell J.R."/>
            <person name="Zhou G.-P."/>
            <person name="Zweckstetter M."/>
            <person name="Rigby A.C."/>
            <person name="Chou J.J."/>
        </authorList>
    </citation>
    <scope>STRUCTURE BY NMR OF 2-58</scope>
    <scope>INTERACTION WITH PPP1R12A</scope>
    <scope>SUBUNIT</scope>
    <scope>COILED-COIL</scope>
</reference>
<reference evidence="32" key="26">
    <citation type="journal article" date="2010" name="J. Biol. Chem.">
        <title>A crystal structure of the cyclic GMP-dependent protein kinase I{beta} dimerization/docking domain reveals molecular details of isoform-specific anchoring.</title>
        <authorList>
            <person name="Casteel D.E."/>
            <person name="Smith-Nguyen E.V."/>
            <person name="Sankaran B."/>
            <person name="Roh S.H."/>
            <person name="Pilz R.B."/>
            <person name="Kim C."/>
        </authorList>
    </citation>
    <scope>X-RAY CRYSTALLOGRAPHY (2.27 ANGSTROMS) OF 4-55 (ISOFORM BETA)</scope>
    <scope>SUBUNIT</scope>
</reference>
<reference evidence="33 34 35" key="27">
    <citation type="journal article" date="2011" name="PLoS ONE">
        <title>Co-crystal structures of PKG Ibeta (92-227) with cGMP and cAMP reveal the molecular details of cyclic-nucleotide binding.</title>
        <authorList>
            <person name="Kim J.J."/>
            <person name="Casteel D.E."/>
            <person name="Huang G."/>
            <person name="Kwon T.H."/>
            <person name="Ren R.K."/>
            <person name="Zwart P."/>
            <person name="Headd J.J."/>
            <person name="Brown N.G."/>
            <person name="Chow D.C."/>
            <person name="Palzkill T."/>
            <person name="Kim C."/>
        </authorList>
    </citation>
    <scope>X-RAY CRYSTALLOGRAPHY (2.49 ANGSTROMS) OF 92-227 (ISOFORM BETA) IN COMPLEX WITH CGMP AND CAMP</scope>
</reference>
<reference evidence="38 39" key="28">
    <citation type="journal article" date="2014" name="Biochemistry">
        <title>Neutron diffraction reveals hydrogen bonds critical for cGMP-selective activation: insights for cGMP-dependent protein kinase agonist design.</title>
        <authorList>
            <person name="Huang G.Y."/>
            <person name="Gerlits O.O."/>
            <person name="Blakeley M.P."/>
            <person name="Sankaran B."/>
            <person name="Kovalevsky A.Y."/>
            <person name="Kim C."/>
        </authorList>
    </citation>
    <scope>X-RAY CRYSTALLOGRAPHY (1.32 ANGSTROMS) OF 204-354 (ISOFORM BETA) IN COMPLEX WITH CAMP AND CGMP</scope>
</reference>
<reference evidence="36 37" key="29">
    <citation type="journal article" date="2014" name="Structure">
        <title>Structural basis for cyclic-nucleotide selectivity and cGMP-selective activation of PKG I.</title>
        <authorList>
            <person name="Huang G.Y."/>
            <person name="Kim J.J."/>
            <person name="Reger A.S."/>
            <person name="Lorenz R."/>
            <person name="Moon E.W."/>
            <person name="Zhao C."/>
            <person name="Casteel D.E."/>
            <person name="Bertinetti D."/>
            <person name="Vanschouwen B."/>
            <person name="Selvaratnam R."/>
            <person name="Pflugrath J.W."/>
            <person name="Sankaran B."/>
            <person name="Melacini G."/>
            <person name="Herberg F.W."/>
            <person name="Kim C."/>
        </authorList>
    </citation>
    <scope>X-RAY CRYSTALLOGRAPHY (1.65 ANGSTROMS) OF 204-354 (ISOFORM BETA) IN COMPLEX WITH CGMP</scope>
    <scope>MUTAGENESIS OF LEU-281; ARG-282; THR-302 AND TYR-336</scope>
</reference>
<reference key="30">
    <citation type="journal article" date="2007" name="Nature">
        <title>Patterns of somatic mutation in human cancer genomes.</title>
        <authorList>
            <person name="Greenman C."/>
            <person name="Stephens P."/>
            <person name="Smith R."/>
            <person name="Dalgliesh G.L."/>
            <person name="Hunter C."/>
            <person name="Bignell G."/>
            <person name="Davies H."/>
            <person name="Teague J."/>
            <person name="Butler A."/>
            <person name="Stevens C."/>
            <person name="Edkins S."/>
            <person name="O'Meara S."/>
            <person name="Vastrik I."/>
            <person name="Schmidt E.E."/>
            <person name="Avis T."/>
            <person name="Barthorpe S."/>
            <person name="Bhamra G."/>
            <person name="Buck G."/>
            <person name="Choudhury B."/>
            <person name="Clements J."/>
            <person name="Cole J."/>
            <person name="Dicks E."/>
            <person name="Forbes S."/>
            <person name="Gray K."/>
            <person name="Halliday K."/>
            <person name="Harrison R."/>
            <person name="Hills K."/>
            <person name="Hinton J."/>
            <person name="Jenkinson A."/>
            <person name="Jones D."/>
            <person name="Menzies A."/>
            <person name="Mironenko T."/>
            <person name="Perry J."/>
            <person name="Raine K."/>
            <person name="Richardson D."/>
            <person name="Shepherd R."/>
            <person name="Small A."/>
            <person name="Tofts C."/>
            <person name="Varian J."/>
            <person name="Webb T."/>
            <person name="West S."/>
            <person name="Widaa S."/>
            <person name="Yates A."/>
            <person name="Cahill D.P."/>
            <person name="Louis D.N."/>
            <person name="Goldstraw P."/>
            <person name="Nicholson A.G."/>
            <person name="Brasseur F."/>
            <person name="Looijenga L."/>
            <person name="Weber B.L."/>
            <person name="Chiew Y.-E."/>
            <person name="DeFazio A."/>
            <person name="Greaves M.F."/>
            <person name="Green A.R."/>
            <person name="Campbell P."/>
            <person name="Birney E."/>
            <person name="Easton D.F."/>
            <person name="Chenevix-Trench G."/>
            <person name="Tan M.-H."/>
            <person name="Khoo S.K."/>
            <person name="Teh B.T."/>
            <person name="Yuen S.T."/>
            <person name="Leung S.Y."/>
            <person name="Wooster R."/>
            <person name="Futreal P.A."/>
            <person name="Stratton M.R."/>
        </authorList>
    </citation>
    <scope>VARIANTS [LARGE SCALE ANALYSIS] VAL-249 AND SER-267</scope>
</reference>
<reference key="31">
    <citation type="journal article" date="2013" name="Am. J. Hum. Genet.">
        <title>Recurrent gain-of-function mutation in PRKG1 causes thoracic aortic aneurysms and acute aortic dissections.</title>
        <authorList>
            <consortium name="GenTAC Registry Consortium"/>
            <consortium name="National Heart, Lung, and Blood Institute Grand Opportunity Exome Sequencing Project"/>
            <person name="Guo D.C."/>
            <person name="Regalado E."/>
            <person name="Casteel D.E."/>
            <person name="Santos-Cortez R.L."/>
            <person name="Gong L."/>
            <person name="Kim J.J."/>
            <person name="Dyack S."/>
            <person name="Horne S.G."/>
            <person name="Chang G."/>
            <person name="Jondeau G."/>
            <person name="Boileau C."/>
            <person name="Coselli J.S."/>
            <person name="Li Z."/>
            <person name="Leal S.M."/>
            <person name="Shendure J."/>
            <person name="Rieder M.J."/>
            <person name="Bamshad M.J."/>
            <person name="Nickerson D.A."/>
            <person name="Kim C."/>
            <person name="Milewicz D.M."/>
        </authorList>
    </citation>
    <scope>VARIANT AAT8 GLN-177</scope>
    <scope>VARIANTS PHE-474 AND ALA-666</scope>
    <scope>CHARACTERIZATION OF VARIANT AAT8 GLN-177</scope>
</reference>
<proteinExistence type="evidence at protein level"/>